<sequence>MAVQISKKRKFVADGIFKAELNEFLTRELAEDGYSGVEVRVTPTRTEIIILATRTQNVLGEKGRRIRELTAVVQKRFGFPEGSVELYAEKVATRGLCAIAQAESLRYKLLGGLAVRRACYGVLRFIMESGAKGCEVVVSGKLRGQRAKSMKFVDGLMIHSGDPVNYYVDTAVRHVLLRQGVLGIKVKIMLPWDPTGKIGPKKPLPDHVSIVEPKDEILPTTPISEQKGGKPEPPAMPQPVPTA</sequence>
<evidence type="ECO:0000250" key="1">
    <source>
        <dbReference type="UniProtKB" id="P62908"/>
    </source>
</evidence>
<evidence type="ECO:0000255" key="2">
    <source>
        <dbReference type="PROSITE-ProRule" id="PRU00118"/>
    </source>
</evidence>
<evidence type="ECO:0000256" key="3">
    <source>
        <dbReference type="SAM" id="MobiDB-lite"/>
    </source>
</evidence>
<evidence type="ECO:0000269" key="4">
    <source>
    </source>
</evidence>
<evidence type="ECO:0000269" key="5">
    <source>
    </source>
</evidence>
<evidence type="ECO:0000269" key="6">
    <source>
    </source>
</evidence>
<evidence type="ECO:0000269" key="7">
    <source>
    </source>
</evidence>
<evidence type="ECO:0000269" key="8">
    <source>
    </source>
</evidence>
<evidence type="ECO:0000269" key="9">
    <source>
    </source>
</evidence>
<evidence type="ECO:0000269" key="10">
    <source>
    </source>
</evidence>
<evidence type="ECO:0000269" key="11">
    <source>
    </source>
</evidence>
<evidence type="ECO:0000269" key="12">
    <source>
    </source>
</evidence>
<evidence type="ECO:0000269" key="13">
    <source>
    </source>
</evidence>
<evidence type="ECO:0000269" key="14">
    <source>
    </source>
</evidence>
<evidence type="ECO:0000269" key="15">
    <source>
    </source>
</evidence>
<evidence type="ECO:0000269" key="16">
    <source>
    </source>
</evidence>
<evidence type="ECO:0000269" key="17">
    <source>
    </source>
</evidence>
<evidence type="ECO:0000269" key="18">
    <source>
    </source>
</evidence>
<evidence type="ECO:0000269" key="19">
    <source>
    </source>
</evidence>
<evidence type="ECO:0000269" key="20">
    <source>
    </source>
</evidence>
<evidence type="ECO:0000269" key="21">
    <source>
    </source>
</evidence>
<evidence type="ECO:0000269" key="22">
    <source>
    </source>
</evidence>
<evidence type="ECO:0000269" key="23">
    <source>
    </source>
</evidence>
<evidence type="ECO:0000269" key="24">
    <source>
    </source>
</evidence>
<evidence type="ECO:0000269" key="25">
    <source>
    </source>
</evidence>
<evidence type="ECO:0000269" key="26">
    <source>
    </source>
</evidence>
<evidence type="ECO:0000269" key="27">
    <source>
    </source>
</evidence>
<evidence type="ECO:0000269" key="28">
    <source>
    </source>
</evidence>
<evidence type="ECO:0000269" key="29">
    <source>
    </source>
</evidence>
<evidence type="ECO:0000269" key="30">
    <source>
    </source>
</evidence>
<evidence type="ECO:0000269" key="31">
    <source>
    </source>
</evidence>
<evidence type="ECO:0000269" key="32">
    <source>
    </source>
</evidence>
<evidence type="ECO:0000269" key="33">
    <source>
    </source>
</evidence>
<evidence type="ECO:0000269" key="34">
    <source>
    </source>
</evidence>
<evidence type="ECO:0000269" key="35">
    <source>
    </source>
</evidence>
<evidence type="ECO:0000269" key="36">
    <source>
    </source>
</evidence>
<evidence type="ECO:0000269" key="37">
    <source>
    </source>
</evidence>
<evidence type="ECO:0000269" key="38">
    <source>
    </source>
</evidence>
<evidence type="ECO:0000269" key="39">
    <source>
    </source>
</evidence>
<evidence type="ECO:0000269" key="40">
    <source>
    </source>
</evidence>
<evidence type="ECO:0000269" key="41">
    <source>
    </source>
</evidence>
<evidence type="ECO:0000269" key="42">
    <source ref="10"/>
</evidence>
<evidence type="ECO:0000269" key="43">
    <source ref="12"/>
</evidence>
<evidence type="ECO:0000303" key="44">
    <source>
    </source>
</evidence>
<evidence type="ECO:0000303" key="45">
    <source>
    </source>
</evidence>
<evidence type="ECO:0000303" key="46">
    <source>
    </source>
</evidence>
<evidence type="ECO:0000303" key="47">
    <source>
    </source>
</evidence>
<evidence type="ECO:0000305" key="48"/>
<evidence type="ECO:0007744" key="49">
    <source>
    </source>
</evidence>
<evidence type="ECO:0007744" key="50">
    <source>
    </source>
</evidence>
<evidence type="ECO:0007744" key="51">
    <source>
    </source>
</evidence>
<evidence type="ECO:0007744" key="52">
    <source>
    </source>
</evidence>
<evidence type="ECO:0007744" key="53">
    <source>
    </source>
</evidence>
<evidence type="ECO:0007744" key="54">
    <source>
    </source>
</evidence>
<evidence type="ECO:0007744" key="55">
    <source>
    </source>
</evidence>
<evidence type="ECO:0007744" key="56">
    <source>
    </source>
</evidence>
<evidence type="ECO:0007744" key="57">
    <source>
    </source>
</evidence>
<evidence type="ECO:0007744" key="58">
    <source>
    </source>
</evidence>
<evidence type="ECO:0007744" key="59">
    <source>
    </source>
</evidence>
<evidence type="ECO:0007744" key="60">
    <source>
    </source>
</evidence>
<evidence type="ECO:0007744" key="61">
    <source>
    </source>
</evidence>
<evidence type="ECO:0007744" key="62">
    <source>
    </source>
</evidence>
<evidence type="ECO:0007744" key="63">
    <source>
    </source>
</evidence>
<evidence type="ECO:0007829" key="64">
    <source>
        <dbReference type="PDB" id="6ZLW"/>
    </source>
</evidence>
<evidence type="ECO:0007829" key="65">
    <source>
        <dbReference type="PDB" id="6ZXG"/>
    </source>
</evidence>
<evidence type="ECO:0007829" key="66">
    <source>
        <dbReference type="PDB" id="7R4X"/>
    </source>
</evidence>
<comment type="function">
    <text evidence="4 5 6 7 11 14 15 16 20 22 23 27 28 29 30 40 41">Component of the small ribosomal subunit (PubMed:23636399, PubMed:8706699). The ribosome is a large ribonucleoprotein complex responsible for the synthesis of proteins in the cell (PubMed:23636399, PubMed:8706699). Has endonuclease activity and plays a role in repair of damaged DNA (PubMed:7775413). Cleaves phosphodiester bonds of DNAs containing altered bases with broad specificity and cleaves supercoiled DNA more efficiently than relaxed DNA (PubMed:15707971). Displays high binding affinity for 7,8-dihydro-8-oxoguanine (8-oxoG), a common DNA lesion caused by reactive oxygen species (ROS) (PubMed:14706345). Has also been shown to bind with similar affinity to intact and damaged DNA (PubMed:18610840). Stimulates the N-glycosylase activity of the base excision protein OGG1 (PubMed:15518571). Enhances the uracil excision activity of UNG1 (PubMed:18973764). Also stimulates the cleavage of the phosphodiester backbone by APEX1 (PubMed:18973764). When located in the mitochondrion, reduces cellular ROS levels and mitochondrial DNA damage (PubMed:23911537). Has also been shown to negatively regulate DNA repair in cells exposed to hydrogen peroxide (PubMed:17049931). Plays a role in regulating transcription as part of the NF-kappa-B p65-p50 complex where it binds to the RELA/p65 subunit, enhances binding of the complex to DNA and promotes transcription of target genes (PubMed:18045535). Represses its own translation by binding to its cognate mRNA (PubMed:20217897). Binds to and protects TP53/p53 from MDM2-mediated ubiquitination (PubMed:19656744). Involved in spindle formation and chromosome movement during mitosis by regulating microtubule polymerization (PubMed:23131551). Involved in induction of apoptosis through its role in activation of CASP8 (PubMed:14988002). Induces neuronal apoptosis by interacting with the E2F1 transcription factor and acting synergistically with it to up-regulate pro-apoptotic proteins BCL2L11/BIM and HRK/Dp5 (PubMed:20605787). Interacts with TRADD following exposure to UV radiation and induces apoptosis by caspase-dependent JNK activation (PubMed:22510408).</text>
</comment>
<comment type="catalytic activity">
    <reaction evidence="40">
        <text>2'-deoxyribonucleotide-(2'-deoxyribose 5'-phosphate)-2'-deoxyribonucleotide-DNA = a 3'-end 2'-deoxyribonucleotide-(2,3-dehydro-2,3-deoxyribose 5'-phosphate)-DNA + a 5'-end 5'-phospho-2'-deoxyribonucleoside-DNA + H(+)</text>
        <dbReference type="Rhea" id="RHEA:66592"/>
        <dbReference type="Rhea" id="RHEA-COMP:13180"/>
        <dbReference type="Rhea" id="RHEA-COMP:16897"/>
        <dbReference type="Rhea" id="RHEA-COMP:17067"/>
        <dbReference type="ChEBI" id="CHEBI:15378"/>
        <dbReference type="ChEBI" id="CHEBI:136412"/>
        <dbReference type="ChEBI" id="CHEBI:157695"/>
        <dbReference type="ChEBI" id="CHEBI:167181"/>
        <dbReference type="EC" id="4.2.99.18"/>
    </reaction>
</comment>
<comment type="activity regulation">
    <text evidence="7">Endonuclease activity is inhibited by MgCl2 on apurinic/apyrimidinic DNA but not on UV-irradiated DNA.</text>
</comment>
<comment type="biophysicochemical properties">
    <phDependence>
        <text evidence="7">Optimum pH is between 8.0 and 9.0 with activity decreasing sharply below 8.0.</text>
    </phDependence>
</comment>
<comment type="subunit">
    <text evidence="1 6 9 12 14 16 17 18 19 20 21 23 24 25 26 27 29 30 31 32 35 41 46">Component of the 40S small ribosomal subunit (PubMed:23636399, PubMed:8706699). Identified in a IGF2BP1-dependent mRNP granule complex containing untranslated mRNAs (PubMed:17289661). Interacts with HNRPD (PubMed:24423872). Interacts with PRMT1; the interaction methylates RPS3 (PubMed:19460357). Interacts with SUMO1; the interaction sumoylates RPS3 (PubMed:21968017). Interacts with UBC9 (PubMed:21968017). Interacts with CDK1; the interaction phosphorylates RPS3 (PubMed:21871177). Interacts with PRKCD; the interaction phosphorylates RPS3 (PubMed:19059439). Interacts with PKB/AKT; the interaction phosphorylates RPS3 (PubMed:20605787). Interacts with E2F1; the interaction occurs in the absence of nerve growth factor and increases transcription of pro-apoptotic proteins BCL2L11/BIM and HRK/Dp5 (PubMed:20605787). Interacts with the base excision repair proteins APEX1 and OGG1; interaction with OGG1 increases OGG1 N-glycosylase activity (PubMed:15518571). Interacts with UNG; the interaction increases the uracil excision activity of UNG1 (PubMed:18973764). Interacts with HSP90; the interaction prevents the ubiquitination and proteasome-dependent degradation of RPS3 and is suppressed by increased ROS levels (PubMed:16314389). Interacts with TOM70; the interaction promotes translocation of RPS3 to the mitochondrion (PubMed:23911537). Interacts (via N-terminus) with RELA (via N-terminus); the interaction enhances the DNA-binding activity of the NF-kappa-B p65-p50 complex (PubMed:18045535). Interacts with NFKBIA; the interaction is direct and may bridge the interaction between RPS3 and RELA (PubMed:24457201). Interacts with IKKB; the interaction phosphorylates RPS3 and enhances its translocation to the nucleus (PubMed:21399639). Interacts (via KH domain) with MDM2 and TP53 (PubMed:19656744). Interacts with TRADD (PubMed:22510408). Interacts (via N-terminus) with E.coli O157:H7 (strain EDL933) nleH1 and nleH2; the interaction with nleH1 inhibits phosphorylation by IKKB, reduces RPS3 nuclear abundance and inhibits transcriptional activation by the NF-kappa-B p65-p50 complex (PubMed:20041225, PubMed:21399639). Interacts with ASCC3 (PubMed:28757607). Identified in a HCV IRES-mediated translation complex, at least composed of EIF3C, IGF2BP1, RPS3 and HCV RNA-replicon (PubMed:19541769). Interacts with CRY1 (By similarity).</text>
</comment>
<comment type="interaction">
    <interactant intactId="EBI-351193">
        <id>P23396</id>
    </interactant>
    <interactant intactId="EBI-347804">
        <id>P68400</id>
        <label>CSNK2A1</label>
    </interactant>
    <organismsDiffer>false</organismsDiffer>
    <experiments>2</experiments>
</comment>
<comment type="interaction">
    <interactant intactId="EBI-351193">
        <id>P23396</id>
    </interactant>
    <interactant intactId="EBI-466029">
        <id>P42858</id>
        <label>HTT</label>
    </interactant>
    <organismsDiffer>false</organismsDiffer>
    <experiments>3</experiments>
</comment>
<comment type="interaction">
    <interactant intactId="EBI-351193">
        <id>P23396</id>
    </interactant>
    <interactant intactId="EBI-81266">
        <id>O14920</id>
        <label>IKBKB</label>
    </interactant>
    <organismsDiffer>false</organismsDiffer>
    <experiments>4</experiments>
</comment>
<comment type="interaction">
    <interactant intactId="EBI-351193">
        <id>P23396</id>
    </interactant>
    <interactant intactId="EBI-5323863">
        <id>Q5S007</id>
        <label>LRRK2</label>
    </interactant>
    <organismsDiffer>false</organismsDiffer>
    <experiments>4</experiments>
</comment>
<comment type="interaction">
    <interactant intactId="EBI-351193">
        <id>P23396</id>
    </interactant>
    <interactant intactId="EBI-2558389">
        <id>Q96GA3</id>
        <label>LTV1</label>
    </interactant>
    <organismsDiffer>false</organismsDiffer>
    <experiments>5</experiments>
</comment>
<comment type="interaction">
    <interactant intactId="EBI-351193">
        <id>P23396</id>
    </interactant>
    <interactant intactId="EBI-389668">
        <id>Q00987</id>
        <label>MDM2</label>
    </interactant>
    <organismsDiffer>false</organismsDiffer>
    <experiments>8</experiments>
</comment>
<comment type="interaction">
    <interactant intactId="EBI-351193">
        <id>P23396</id>
    </interactant>
    <interactant intactId="EBI-716247">
        <id>Q15843</id>
        <label>NEDD8</label>
    </interactant>
    <organismsDiffer>false</organismsDiffer>
    <experiments>3</experiments>
</comment>
<comment type="interaction">
    <interactant intactId="EBI-351193">
        <id>P23396</id>
    </interactant>
    <interactant intactId="EBI-300010">
        <id>P19838</id>
        <label>NFKB1</label>
    </interactant>
    <organismsDiffer>false</organismsDiffer>
    <experiments>4</experiments>
</comment>
<comment type="interaction">
    <interactant intactId="EBI-351193">
        <id>P23396</id>
    </interactant>
    <interactant intactId="EBI-307386">
        <id>P25963</id>
        <label>NFKBIA</label>
    </interactant>
    <organismsDiffer>false</organismsDiffer>
    <experiments>6</experiments>
</comment>
<comment type="interaction">
    <interactant intactId="EBI-351193">
        <id>P23396</id>
    </interactant>
    <interactant intactId="EBI-716596">
        <id>Q08752</id>
        <label>PPID</label>
    </interactant>
    <organismsDiffer>false</organismsDiffer>
    <experiments>4</experiments>
</comment>
<comment type="interaction">
    <interactant intactId="EBI-351193">
        <id>P23396</id>
    </interactant>
    <interactant intactId="EBI-73886">
        <id>Q04206</id>
        <label>RELA</label>
    </interactant>
    <organismsDiffer>false</organismsDiffer>
    <experiments>8</experiments>
</comment>
<comment type="interaction">
    <interactant intactId="EBI-351193">
        <id>P23396</id>
    </interactant>
    <interactant intactId="EBI-354442">
        <id>P46783</id>
        <label>RPS10</label>
    </interactant>
    <organismsDiffer>false</organismsDiffer>
    <experiments>3</experiments>
</comment>
<comment type="interaction">
    <interactant intactId="EBI-351193">
        <id>P23396</id>
    </interactant>
    <interactant intactId="EBI-366083">
        <id>P04637</id>
        <label>TP53</label>
    </interactant>
    <organismsDiffer>false</organismsDiffer>
    <experiments>4</experiments>
</comment>
<comment type="interaction">
    <interactant intactId="EBI-351193">
        <id>P23396</id>
    </interactant>
    <interactant intactId="EBI-347088">
        <id>P63104</id>
        <label>YWHAZ</label>
    </interactant>
    <organismsDiffer>false</organismsDiffer>
    <experiments>2</experiments>
</comment>
<comment type="subcellular location">
    <subcellularLocation>
        <location evidence="9 12 13 14 22 25 29">Cytoplasm</location>
    </subcellularLocation>
    <subcellularLocation>
        <location evidence="13 14 18 22 25">Nucleus</location>
    </subcellularLocation>
    <subcellularLocation>
        <location evidence="9 18">Nucleus</location>
        <location evidence="9 18">Nucleolus</location>
    </subcellularLocation>
    <subcellularLocation>
        <location evidence="30">Mitochondrion inner membrane</location>
        <topology evidence="30">Peripheral membrane protein</topology>
    </subcellularLocation>
    <subcellularLocation>
        <location evidence="28">Cytoplasm</location>
        <location evidence="28">Cytoskeleton</location>
        <location evidence="28">Spindle</location>
    </subcellularLocation>
    <text evidence="1 12 13 28 30">In normal cells, located mainly in the cytoplasm with small amounts in the nucleus but translocates to the nucleus in cells undergoing apoptosis (By similarity). Nuclear translocation is induced by DNA damaging agents such as hydrogen peroxide (PubMed:17560175). Accumulates in the mitochondrion in response to increased ROS levels (PubMed:23911537). Localizes to the spindle during mitosis (PubMed:23131551). Localized in cytoplasmic mRNP granules containing untranslated mRNAs (PubMed:17289661).</text>
</comment>
<comment type="alternative products">
    <event type="alternative splicing"/>
    <isoform>
        <id>P23396-1</id>
        <name>1</name>
        <sequence type="displayed"/>
    </isoform>
    <isoform>
        <id>P23396-2</id>
        <name>2</name>
        <sequence type="described" ref="VSP_046667"/>
    </isoform>
</comment>
<comment type="PTM">
    <text evidence="18">Methylation by PRMT1 is required for import into the nucleolus and for ribosome assembly.</text>
</comment>
<comment type="PTM">
    <text evidence="26">Sumoylation by SUMO1 enhances protein stability through increased resistance to proteolysis. Sumoylation occurs at one or more of the three consensus sites, Lys-18, Lys-214 and Lys-230.</text>
</comment>
<comment type="PTM">
    <text evidence="13 17 23 24 25">Phosphorylation at Thr-221 by CDK1 occurs mainly in G2/M phase (PubMed:21871177). Phosphorylation by PRKCD occurs on a non-ribosomal-associated form which results in translocation of RPS3 to the nucleus and enhances its endonuclease activity (PubMed:19059439). Phosphorylated on Ser-209 by IKKB in response to activation of the NF-kappa-B p65-p50 complex which enhances the association of RPS3 with importin-alpha and mediates the nuclear translocation of RPS3 (PubMed:21399639). Phosphorylation by MAPK is required for translocation to the nucleus following exposure of cells to DNA damaging agents such as hydrogen peroxide (PubMed:17560175). Phosphorylation by PKB/AKT mediates RPS3 nuclear translocation, enhances RPS3 endonuclease activity and suppresses RPS3-induced neuronal apoptosis (PubMed:20605787).</text>
</comment>
<comment type="PTM">
    <text evidence="9 33 34 36 37 38 39">Ubiquitinated; ubiquitination is prevented by interaction with HSP90 which stabilizes the protein (PubMed:16314389). Monoubiquitinated at Lys-214 by RNF10 and ZNF598 when a ribosome has stalled during translation of poly(A) sequences, leading to preclude synthesis of a long poly-lysine tail and initiate the ribosome quality control (RQC) pathway to degrade the potentially detrimental aberrant nascent polypeptide (PubMed:28065601, PubMed:28132843, PubMed:32011234, PubMed:34348161, PubMed:34469731). Deubiquitinated at Lys-214 by USP10, preventing degradation by the proteasome and promoting 40S ribosome subunit recycling following ribosome dissociation (PubMed:31981475, PubMed:34469731).</text>
</comment>
<comment type="PTM">
    <text evidence="1">Ufmylated by UFL1.</text>
</comment>
<comment type="similarity">
    <text evidence="48">Belongs to the universal ribosomal protein uS3 family.</text>
</comment>
<comment type="sequence caution" evidence="48">
    <conflict type="erroneous initiation">
        <sequence resource="EMBL-CDS" id="BAB93471"/>
    </conflict>
    <text>Truncated N-terminus.</text>
</comment>
<keyword id="KW-0002">3D-structure</keyword>
<keyword id="KW-0007">Acetylation</keyword>
<keyword id="KW-0025">Alternative splicing</keyword>
<keyword id="KW-0053">Apoptosis</keyword>
<keyword id="KW-0131">Cell cycle</keyword>
<keyword id="KW-0132">Cell division</keyword>
<keyword id="KW-0963">Cytoplasm</keyword>
<keyword id="KW-0206">Cytoskeleton</keyword>
<keyword id="KW-0903">Direct protein sequencing</keyword>
<keyword id="KW-0227">DNA damage</keyword>
<keyword id="KW-0234">DNA repair</keyword>
<keyword id="KW-0238">DNA-binding</keyword>
<keyword id="KW-1017">Isopeptide bond</keyword>
<keyword id="KW-0456">Lyase</keyword>
<keyword id="KW-0472">Membrane</keyword>
<keyword id="KW-0488">Methylation</keyword>
<keyword id="KW-0496">Mitochondrion</keyword>
<keyword id="KW-0999">Mitochondrion inner membrane</keyword>
<keyword id="KW-0498">Mitosis</keyword>
<keyword id="KW-0539">Nucleus</keyword>
<keyword id="KW-0597">Phosphoprotein</keyword>
<keyword id="KW-1267">Proteomics identification</keyword>
<keyword id="KW-1185">Reference proteome</keyword>
<keyword id="KW-0687">Ribonucleoprotein</keyword>
<keyword id="KW-0689">Ribosomal protein</keyword>
<keyword id="KW-0694">RNA-binding</keyword>
<keyword id="KW-0804">Transcription</keyword>
<keyword id="KW-0805">Transcription regulation</keyword>
<keyword id="KW-0810">Translation regulation</keyword>
<keyword id="KW-0832">Ubl conjugation</keyword>
<dbReference type="EC" id="4.2.99.18" evidence="40"/>
<dbReference type="EMBL" id="U14990">
    <property type="protein sequence ID" value="AAB60336.1"/>
    <property type="molecule type" value="mRNA"/>
</dbReference>
<dbReference type="EMBL" id="U14991">
    <property type="protein sequence ID" value="AAB60337.1"/>
    <property type="molecule type" value="mRNA"/>
</dbReference>
<dbReference type="EMBL" id="U14992">
    <property type="protein sequence ID" value="AAB60338.1"/>
    <property type="molecule type" value="mRNA"/>
</dbReference>
<dbReference type="EMBL" id="X55715">
    <property type="protein sequence ID" value="CAA39248.1"/>
    <property type="molecule type" value="mRNA"/>
</dbReference>
<dbReference type="EMBL" id="S42658">
    <property type="protein sequence ID" value="AAB19349.2"/>
    <property type="molecule type" value="mRNA"/>
</dbReference>
<dbReference type="EMBL" id="AB061838">
    <property type="protein sequence ID" value="BAB79476.1"/>
    <property type="molecule type" value="Genomic_DNA"/>
</dbReference>
<dbReference type="EMBL" id="AY791291">
    <property type="protein sequence ID" value="AAV40835.1"/>
    <property type="molecule type" value="Genomic_DNA"/>
</dbReference>
<dbReference type="EMBL" id="AK313051">
    <property type="protein sequence ID" value="BAG35882.1"/>
    <property type="molecule type" value="mRNA"/>
</dbReference>
<dbReference type="EMBL" id="AP000744">
    <property type="status" value="NOT_ANNOTATED_CDS"/>
    <property type="molecule type" value="Genomic_DNA"/>
</dbReference>
<dbReference type="EMBL" id="CH471076">
    <property type="protein sequence ID" value="EAW74963.1"/>
    <property type="molecule type" value="Genomic_DNA"/>
</dbReference>
<dbReference type="EMBL" id="BC003137">
    <property type="protein sequence ID" value="AAH03137.1"/>
    <property type="molecule type" value="mRNA"/>
</dbReference>
<dbReference type="EMBL" id="BC003577">
    <property type="protein sequence ID" value="AAH03577.1"/>
    <property type="molecule type" value="mRNA"/>
</dbReference>
<dbReference type="EMBL" id="BC013196">
    <property type="protein sequence ID" value="AAH13196.1"/>
    <property type="molecule type" value="mRNA"/>
</dbReference>
<dbReference type="EMBL" id="BC034149">
    <property type="protein sequence ID" value="AAH34149.1"/>
    <property type="molecule type" value="mRNA"/>
</dbReference>
<dbReference type="EMBL" id="BC071917">
    <property type="protein sequence ID" value="AAH71917.1"/>
    <property type="molecule type" value="mRNA"/>
</dbReference>
<dbReference type="EMBL" id="BC100284">
    <property type="protein sequence ID" value="AAI00285.1"/>
    <property type="molecule type" value="mRNA"/>
</dbReference>
<dbReference type="EMBL" id="L16016">
    <property type="protein sequence ID" value="AAA18095.1"/>
    <property type="molecule type" value="Genomic_DNA"/>
</dbReference>
<dbReference type="EMBL" id="AB062288">
    <property type="protein sequence ID" value="BAB93471.1"/>
    <property type="status" value="ALT_INIT"/>
    <property type="molecule type" value="mRNA"/>
</dbReference>
<dbReference type="CCDS" id="CCDS58161.1">
    <molecule id="P23396-2"/>
</dbReference>
<dbReference type="CCDS" id="CCDS8236.1">
    <molecule id="P23396-1"/>
</dbReference>
<dbReference type="PIR" id="A41247">
    <property type="entry name" value="R3HUS3"/>
</dbReference>
<dbReference type="RefSeq" id="NP_000996.2">
    <molecule id="P23396-1"/>
    <property type="nucleotide sequence ID" value="NM_001005.4"/>
</dbReference>
<dbReference type="RefSeq" id="NP_001243731.1">
    <molecule id="P23396-1"/>
    <property type="nucleotide sequence ID" value="NM_001256802.2"/>
</dbReference>
<dbReference type="RefSeq" id="NP_001247435.1">
    <molecule id="P23396-2"/>
    <property type="nucleotide sequence ID" value="NM_001260506.2"/>
</dbReference>
<dbReference type="RefSeq" id="NP_001247436.1">
    <property type="nucleotide sequence ID" value="NM_001260507.1"/>
</dbReference>
<dbReference type="PDB" id="1WH9">
    <property type="method" value="NMR"/>
    <property type="chains" value="A=17-95"/>
</dbReference>
<dbReference type="PDB" id="4UG0">
    <property type="method" value="EM"/>
    <property type="chains" value="SD=1-243"/>
</dbReference>
<dbReference type="PDB" id="4V6X">
    <property type="method" value="EM"/>
    <property type="resolution" value="5.00 A"/>
    <property type="chains" value="AD=1-243"/>
</dbReference>
<dbReference type="PDB" id="5A2Q">
    <property type="method" value="EM"/>
    <property type="resolution" value="3.90 A"/>
    <property type="chains" value="D=1-243"/>
</dbReference>
<dbReference type="PDB" id="5AJ0">
    <property type="method" value="EM"/>
    <property type="resolution" value="3.50 A"/>
    <property type="chains" value="BD=1-243"/>
</dbReference>
<dbReference type="PDB" id="5FLX">
    <property type="method" value="EM"/>
    <property type="resolution" value="3.90 A"/>
    <property type="chains" value="D=1-243"/>
</dbReference>
<dbReference type="PDB" id="5LKS">
    <property type="method" value="EM"/>
    <property type="resolution" value="3.60 A"/>
    <property type="chains" value="SD=1-243"/>
</dbReference>
<dbReference type="PDB" id="5OA3">
    <property type="method" value="EM"/>
    <property type="resolution" value="4.30 A"/>
    <property type="chains" value="D=1-243"/>
</dbReference>
<dbReference type="PDB" id="5T2C">
    <property type="method" value="EM"/>
    <property type="resolution" value="3.60 A"/>
    <property type="chains" value="Aq=1-243"/>
</dbReference>
<dbReference type="PDB" id="5VYC">
    <property type="method" value="X-ray"/>
    <property type="resolution" value="6.00 A"/>
    <property type="chains" value="D1/D2/D3/D4/D5/D6=1-243"/>
</dbReference>
<dbReference type="PDB" id="6FEC">
    <property type="method" value="EM"/>
    <property type="resolution" value="6.30 A"/>
    <property type="chains" value="g=1-227"/>
</dbReference>
<dbReference type="PDB" id="6G51">
    <property type="method" value="EM"/>
    <property type="resolution" value="4.10 A"/>
    <property type="chains" value="D=1-243"/>
</dbReference>
<dbReference type="PDB" id="6G53">
    <property type="method" value="EM"/>
    <property type="resolution" value="4.50 A"/>
    <property type="chains" value="D=1-243"/>
</dbReference>
<dbReference type="PDB" id="6G5H">
    <property type="method" value="EM"/>
    <property type="resolution" value="3.60 A"/>
    <property type="chains" value="D=1-243"/>
</dbReference>
<dbReference type="PDB" id="6G5I">
    <property type="method" value="EM"/>
    <property type="resolution" value="3.50 A"/>
    <property type="chains" value="D=1-243"/>
</dbReference>
<dbReference type="PDB" id="6IP5">
    <property type="method" value="EM"/>
    <property type="resolution" value="3.90 A"/>
    <property type="chains" value="2p=1-243"/>
</dbReference>
<dbReference type="PDB" id="6IP6">
    <property type="method" value="EM"/>
    <property type="resolution" value="4.50 A"/>
    <property type="chains" value="2p=1-243"/>
</dbReference>
<dbReference type="PDB" id="6IP8">
    <property type="method" value="EM"/>
    <property type="resolution" value="3.90 A"/>
    <property type="chains" value="2p=1-243"/>
</dbReference>
<dbReference type="PDB" id="6OLE">
    <property type="method" value="EM"/>
    <property type="resolution" value="3.10 A"/>
    <property type="chains" value="SD=2-227"/>
</dbReference>
<dbReference type="PDB" id="6OLF">
    <property type="method" value="EM"/>
    <property type="resolution" value="3.90 A"/>
    <property type="chains" value="SD=2-227"/>
</dbReference>
<dbReference type="PDB" id="6OLG">
    <property type="method" value="EM"/>
    <property type="resolution" value="3.40 A"/>
    <property type="chains" value="BD=2-221"/>
</dbReference>
<dbReference type="PDB" id="6OLI">
    <property type="method" value="EM"/>
    <property type="resolution" value="3.50 A"/>
    <property type="chains" value="SD=2-227"/>
</dbReference>
<dbReference type="PDB" id="6OLZ">
    <property type="method" value="EM"/>
    <property type="resolution" value="3.90 A"/>
    <property type="chains" value="BD=2-221"/>
</dbReference>
<dbReference type="PDB" id="6OM0">
    <property type="method" value="EM"/>
    <property type="resolution" value="3.10 A"/>
    <property type="chains" value="SD=2-227"/>
</dbReference>
<dbReference type="PDB" id="6OM7">
    <property type="method" value="EM"/>
    <property type="resolution" value="3.70 A"/>
    <property type="chains" value="SD=2-227"/>
</dbReference>
<dbReference type="PDB" id="6QZP">
    <property type="method" value="EM"/>
    <property type="resolution" value="2.90 A"/>
    <property type="chains" value="SD=1-227"/>
</dbReference>
<dbReference type="PDB" id="6XA1">
    <property type="method" value="EM"/>
    <property type="resolution" value="2.80 A"/>
    <property type="chains" value="SD=4-227"/>
</dbReference>
<dbReference type="PDB" id="6Y0G">
    <property type="method" value="EM"/>
    <property type="resolution" value="3.20 A"/>
    <property type="chains" value="SD=1-243"/>
</dbReference>
<dbReference type="PDB" id="6Y2L">
    <property type="method" value="EM"/>
    <property type="resolution" value="3.00 A"/>
    <property type="chains" value="SD=1-243"/>
</dbReference>
<dbReference type="PDB" id="6Y57">
    <property type="method" value="EM"/>
    <property type="resolution" value="3.50 A"/>
    <property type="chains" value="SD=1-243"/>
</dbReference>
<dbReference type="PDB" id="6YBS">
    <property type="method" value="EM"/>
    <property type="resolution" value="3.10 A"/>
    <property type="chains" value="Z=1-243"/>
</dbReference>
<dbReference type="PDB" id="6Z6L">
    <property type="method" value="EM"/>
    <property type="resolution" value="3.00 A"/>
    <property type="chains" value="SD=1-243"/>
</dbReference>
<dbReference type="PDB" id="6Z6M">
    <property type="method" value="EM"/>
    <property type="resolution" value="3.10 A"/>
    <property type="chains" value="SD=1-243"/>
</dbReference>
<dbReference type="PDB" id="6Z6N">
    <property type="method" value="EM"/>
    <property type="resolution" value="2.90 A"/>
    <property type="chains" value="SD=1-243"/>
</dbReference>
<dbReference type="PDB" id="6ZLW">
    <property type="method" value="EM"/>
    <property type="resolution" value="2.60 A"/>
    <property type="chains" value="F=1-243"/>
</dbReference>
<dbReference type="PDB" id="6ZM7">
    <property type="method" value="EM"/>
    <property type="resolution" value="2.70 A"/>
    <property type="chains" value="SD=1-243"/>
</dbReference>
<dbReference type="PDB" id="6ZME">
    <property type="method" value="EM"/>
    <property type="resolution" value="3.00 A"/>
    <property type="chains" value="SD=1-243"/>
</dbReference>
<dbReference type="PDB" id="6ZMI">
    <property type="method" value="EM"/>
    <property type="resolution" value="2.60 A"/>
    <property type="chains" value="SD=1-243"/>
</dbReference>
<dbReference type="PDB" id="6ZMO">
    <property type="method" value="EM"/>
    <property type="resolution" value="3.10 A"/>
    <property type="chains" value="SD=1-243"/>
</dbReference>
<dbReference type="PDB" id="6ZMT">
    <property type="method" value="EM"/>
    <property type="resolution" value="3.00 A"/>
    <property type="chains" value="F=1-243"/>
</dbReference>
<dbReference type="PDB" id="6ZMW">
    <property type="method" value="EM"/>
    <property type="resolution" value="3.70 A"/>
    <property type="chains" value="Z=1-243"/>
</dbReference>
<dbReference type="PDB" id="6ZN5">
    <property type="method" value="EM"/>
    <property type="resolution" value="3.20 A"/>
    <property type="chains" value="F=3-227"/>
</dbReference>
<dbReference type="PDB" id="6ZOJ">
    <property type="method" value="EM"/>
    <property type="resolution" value="2.80 A"/>
    <property type="chains" value="D=1-243"/>
</dbReference>
<dbReference type="PDB" id="6ZOL">
    <property type="method" value="EM"/>
    <property type="resolution" value="2.80 A"/>
    <property type="chains" value="D=1-243"/>
</dbReference>
<dbReference type="PDB" id="6ZON">
    <property type="method" value="EM"/>
    <property type="resolution" value="3.00 A"/>
    <property type="chains" value="b=1-243"/>
</dbReference>
<dbReference type="PDB" id="6ZP4">
    <property type="method" value="EM"/>
    <property type="resolution" value="2.90 A"/>
    <property type="chains" value="b=1-243"/>
</dbReference>
<dbReference type="PDB" id="6ZUO">
    <property type="method" value="EM"/>
    <property type="resolution" value="3.10 A"/>
    <property type="chains" value="D=1-243"/>
</dbReference>
<dbReference type="PDB" id="6ZV6">
    <property type="method" value="EM"/>
    <property type="resolution" value="2.90 A"/>
    <property type="chains" value="D=1-243"/>
</dbReference>
<dbReference type="PDB" id="6ZVH">
    <property type="method" value="EM"/>
    <property type="resolution" value="2.90 A"/>
    <property type="chains" value="D=1-227"/>
</dbReference>
<dbReference type="PDB" id="6ZVJ">
    <property type="method" value="EM"/>
    <property type="resolution" value="3.80 A"/>
    <property type="chains" value="b=4-227"/>
</dbReference>
<dbReference type="PDB" id="6ZXD">
    <property type="method" value="EM"/>
    <property type="resolution" value="3.20 A"/>
    <property type="chains" value="D=1-243"/>
</dbReference>
<dbReference type="PDB" id="6ZXE">
    <property type="method" value="EM"/>
    <property type="resolution" value="3.00 A"/>
    <property type="chains" value="D=1-243"/>
</dbReference>
<dbReference type="PDB" id="6ZXF">
    <property type="method" value="EM"/>
    <property type="resolution" value="3.70 A"/>
    <property type="chains" value="D=1-243"/>
</dbReference>
<dbReference type="PDB" id="6ZXG">
    <property type="method" value="EM"/>
    <property type="resolution" value="2.60 A"/>
    <property type="chains" value="D=1-243"/>
</dbReference>
<dbReference type="PDB" id="6ZXH">
    <property type="method" value="EM"/>
    <property type="resolution" value="2.70 A"/>
    <property type="chains" value="D=1-243"/>
</dbReference>
<dbReference type="PDB" id="7A09">
    <property type="method" value="EM"/>
    <property type="resolution" value="3.50 A"/>
    <property type="chains" value="b=1-243"/>
</dbReference>
<dbReference type="PDB" id="7K5I">
    <property type="method" value="EM"/>
    <property type="resolution" value="2.90 A"/>
    <property type="chains" value="D=1-243"/>
</dbReference>
<dbReference type="PDB" id="7QP6">
    <property type="method" value="EM"/>
    <property type="resolution" value="4.70 A"/>
    <property type="chains" value="Z=1-243"/>
</dbReference>
<dbReference type="PDB" id="7QP7">
    <property type="method" value="EM"/>
    <property type="resolution" value="3.70 A"/>
    <property type="chains" value="Z=1-243"/>
</dbReference>
<dbReference type="PDB" id="7QVP">
    <property type="method" value="EM"/>
    <property type="resolution" value="3.00 A"/>
    <property type="chains" value="RD/SD=1-243"/>
</dbReference>
<dbReference type="PDB" id="7R4X">
    <property type="method" value="EM"/>
    <property type="resolution" value="2.15 A"/>
    <property type="chains" value="D=1-243"/>
</dbReference>
<dbReference type="PDB" id="7TQL">
    <property type="method" value="EM"/>
    <property type="resolution" value="3.40 A"/>
    <property type="chains" value="F=3-227"/>
</dbReference>
<dbReference type="PDB" id="7XNX">
    <property type="method" value="EM"/>
    <property type="resolution" value="2.70 A"/>
    <property type="chains" value="SD=1-243"/>
</dbReference>
<dbReference type="PDB" id="7XNY">
    <property type="method" value="EM"/>
    <property type="resolution" value="2.50 A"/>
    <property type="chains" value="SD=1-243"/>
</dbReference>
<dbReference type="PDB" id="8G5Y">
    <property type="method" value="EM"/>
    <property type="resolution" value="2.29 A"/>
    <property type="chains" value="SD=1-243"/>
</dbReference>
<dbReference type="PDB" id="8G5Z">
    <property type="method" value="EM"/>
    <property type="resolution" value="2.64 A"/>
    <property type="chains" value="SD=1-226"/>
</dbReference>
<dbReference type="PDB" id="8G60">
    <property type="method" value="EM"/>
    <property type="resolution" value="2.54 A"/>
    <property type="chains" value="SD=1-243"/>
</dbReference>
<dbReference type="PDB" id="8G61">
    <property type="method" value="EM"/>
    <property type="resolution" value="2.94 A"/>
    <property type="chains" value="SD=1-243"/>
</dbReference>
<dbReference type="PDB" id="8G6J">
    <property type="method" value="EM"/>
    <property type="resolution" value="2.80 A"/>
    <property type="chains" value="SD=1-243"/>
</dbReference>
<dbReference type="PDB" id="8GLP">
    <property type="method" value="EM"/>
    <property type="resolution" value="1.67 A"/>
    <property type="chains" value="SD=1-243"/>
</dbReference>
<dbReference type="PDB" id="8IFD">
    <property type="method" value="EM"/>
    <property type="resolution" value="2.59 A"/>
    <property type="chains" value="2p=1-243"/>
</dbReference>
<dbReference type="PDB" id="8IFE">
    <property type="method" value="EM"/>
    <property type="resolution" value="2.57 A"/>
    <property type="chains" value="2p=1-243"/>
</dbReference>
<dbReference type="PDB" id="8JDJ">
    <property type="method" value="EM"/>
    <property type="resolution" value="2.50 A"/>
    <property type="chains" value="0=1-243"/>
</dbReference>
<dbReference type="PDB" id="8JDK">
    <property type="method" value="EM"/>
    <property type="resolution" value="2.26 A"/>
    <property type="chains" value="0=1-243"/>
</dbReference>
<dbReference type="PDB" id="8JDL">
    <property type="method" value="EM"/>
    <property type="resolution" value="2.42 A"/>
    <property type="chains" value="0=1-243"/>
</dbReference>
<dbReference type="PDB" id="8JDM">
    <property type="method" value="EM"/>
    <property type="resolution" value="2.67 A"/>
    <property type="chains" value="0=1-243"/>
</dbReference>
<dbReference type="PDB" id="8K2C">
    <property type="method" value="EM"/>
    <property type="resolution" value="2.40 A"/>
    <property type="chains" value="SD=1-243"/>
</dbReference>
<dbReference type="PDB" id="8OZ0">
    <property type="method" value="EM"/>
    <property type="resolution" value="3.50 A"/>
    <property type="chains" value="h=1-243"/>
</dbReference>
<dbReference type="PDB" id="8PJ1">
    <property type="method" value="EM"/>
    <property type="resolution" value="3.40 A"/>
    <property type="chains" value="Z=1-243"/>
</dbReference>
<dbReference type="PDB" id="8PJ2">
    <property type="method" value="EM"/>
    <property type="resolution" value="3.40 A"/>
    <property type="chains" value="Z=1-243"/>
</dbReference>
<dbReference type="PDB" id="8PJ3">
    <property type="method" value="EM"/>
    <property type="resolution" value="3.70 A"/>
    <property type="chains" value="Z=1-243"/>
</dbReference>
<dbReference type="PDB" id="8PJ4">
    <property type="method" value="EM"/>
    <property type="resolution" value="3.20 A"/>
    <property type="chains" value="Z=1-243"/>
</dbReference>
<dbReference type="PDB" id="8PJ5">
    <property type="method" value="EM"/>
    <property type="resolution" value="2.90 A"/>
    <property type="chains" value="Z=1-243"/>
</dbReference>
<dbReference type="PDB" id="8PJ6">
    <property type="method" value="EM"/>
    <property type="resolution" value="2.90 A"/>
    <property type="chains" value="Z=1-243"/>
</dbReference>
<dbReference type="PDB" id="8PPK">
    <property type="method" value="EM"/>
    <property type="resolution" value="2.98 A"/>
    <property type="chains" value="D=1-243"/>
</dbReference>
<dbReference type="PDB" id="8PPL">
    <property type="method" value="EM"/>
    <property type="resolution" value="2.65 A"/>
    <property type="chains" value="AD=1-243"/>
</dbReference>
<dbReference type="PDB" id="8QOI">
    <property type="method" value="EM"/>
    <property type="resolution" value="1.90 A"/>
    <property type="chains" value="SD=1-243"/>
</dbReference>
<dbReference type="PDB" id="8T4S">
    <property type="method" value="EM"/>
    <property type="resolution" value="2.60 A"/>
    <property type="chains" value="D=1-243"/>
</dbReference>
<dbReference type="PDB" id="8UKB">
    <property type="method" value="EM"/>
    <property type="resolution" value="3.05 A"/>
    <property type="chains" value="SD=1-227"/>
</dbReference>
<dbReference type="PDB" id="8XP2">
    <property type="method" value="EM"/>
    <property type="resolution" value="3.20 A"/>
    <property type="chains" value="SD=1-243"/>
</dbReference>
<dbReference type="PDB" id="8XP3">
    <property type="method" value="EM"/>
    <property type="resolution" value="3.40 A"/>
    <property type="chains" value="SD=1-243"/>
</dbReference>
<dbReference type="PDB" id="8XSX">
    <property type="method" value="EM"/>
    <property type="resolution" value="2.40 A"/>
    <property type="chains" value="SD=1-243"/>
</dbReference>
<dbReference type="PDB" id="8XSY">
    <property type="method" value="EM"/>
    <property type="resolution" value="3.00 A"/>
    <property type="chains" value="SD=1-243"/>
</dbReference>
<dbReference type="PDB" id="8XSZ">
    <property type="method" value="EM"/>
    <property type="resolution" value="3.20 A"/>
    <property type="chains" value="SD=1-243"/>
</dbReference>
<dbReference type="PDB" id="8XXL">
    <property type="method" value="EM"/>
    <property type="resolution" value="2.90 A"/>
    <property type="chains" value="SD=1-243"/>
</dbReference>
<dbReference type="PDB" id="8XXM">
    <property type="method" value="EM"/>
    <property type="resolution" value="3.20 A"/>
    <property type="chains" value="SD=1-243"/>
</dbReference>
<dbReference type="PDB" id="8XXN">
    <property type="method" value="EM"/>
    <property type="resolution" value="3.60 A"/>
    <property type="chains" value="SD=1-243"/>
</dbReference>
<dbReference type="PDB" id="8Y0W">
    <property type="method" value="EM"/>
    <property type="resolution" value="3.40 A"/>
    <property type="chains" value="SD=1-243"/>
</dbReference>
<dbReference type="PDB" id="8Y0X">
    <property type="method" value="EM"/>
    <property type="resolution" value="3.30 A"/>
    <property type="chains" value="SD=1-243"/>
</dbReference>
<dbReference type="PDB" id="8YOO">
    <property type="method" value="EM"/>
    <property type="resolution" value="2.00 A"/>
    <property type="chains" value="SD=1-243"/>
</dbReference>
<dbReference type="PDB" id="8YOP">
    <property type="method" value="EM"/>
    <property type="resolution" value="2.20 A"/>
    <property type="chains" value="SD=1-243"/>
</dbReference>
<dbReference type="PDB" id="8ZDB">
    <property type="method" value="EM"/>
    <property type="resolution" value="3.60 A"/>
    <property type="chains" value="D=1-243"/>
</dbReference>
<dbReference type="PDB" id="8ZDC">
    <property type="method" value="EM"/>
    <property type="resolution" value="3.80 A"/>
    <property type="chains" value="D=1-243"/>
</dbReference>
<dbReference type="PDB" id="8ZDD">
    <property type="method" value="EM"/>
    <property type="resolution" value="3.70 A"/>
    <property type="chains" value="D=1-243"/>
</dbReference>
<dbReference type="PDB" id="9BKD">
    <property type="method" value="EM"/>
    <property type="resolution" value="2.60 A"/>
    <property type="chains" value="Z=1-243"/>
</dbReference>
<dbReference type="PDB" id="9BLN">
    <property type="method" value="EM"/>
    <property type="resolution" value="3.90 A"/>
    <property type="chains" value="Z=1-243"/>
</dbReference>
<dbReference type="PDB" id="9C3H">
    <property type="method" value="EM"/>
    <property type="resolution" value="2.00 A"/>
    <property type="chains" value="SK=1-243"/>
</dbReference>
<dbReference type="PDB" id="9G8M">
    <property type="method" value="EM"/>
    <property type="resolution" value="3.30 A"/>
    <property type="chains" value="SD=1-243"/>
</dbReference>
<dbReference type="PDB" id="9G8O">
    <property type="method" value="EM"/>
    <property type="resolution" value="3.40 A"/>
    <property type="chains" value="SD=1-243"/>
</dbReference>
<dbReference type="PDBsum" id="1WH9"/>
<dbReference type="PDBsum" id="4UG0"/>
<dbReference type="PDBsum" id="4V6X"/>
<dbReference type="PDBsum" id="5A2Q"/>
<dbReference type="PDBsum" id="5AJ0"/>
<dbReference type="PDBsum" id="5FLX"/>
<dbReference type="PDBsum" id="5LKS"/>
<dbReference type="PDBsum" id="5OA3"/>
<dbReference type="PDBsum" id="5T2C"/>
<dbReference type="PDBsum" id="5VYC"/>
<dbReference type="PDBsum" id="6FEC"/>
<dbReference type="PDBsum" id="6G51"/>
<dbReference type="PDBsum" id="6G53"/>
<dbReference type="PDBsum" id="6G5H"/>
<dbReference type="PDBsum" id="6G5I"/>
<dbReference type="PDBsum" id="6IP5"/>
<dbReference type="PDBsum" id="6IP6"/>
<dbReference type="PDBsum" id="6IP8"/>
<dbReference type="PDBsum" id="6OLE"/>
<dbReference type="PDBsum" id="6OLF"/>
<dbReference type="PDBsum" id="6OLG"/>
<dbReference type="PDBsum" id="6OLI"/>
<dbReference type="PDBsum" id="6OLZ"/>
<dbReference type="PDBsum" id="6OM0"/>
<dbReference type="PDBsum" id="6OM7"/>
<dbReference type="PDBsum" id="6QZP"/>
<dbReference type="PDBsum" id="6XA1"/>
<dbReference type="PDBsum" id="6Y0G"/>
<dbReference type="PDBsum" id="6Y2L"/>
<dbReference type="PDBsum" id="6Y57"/>
<dbReference type="PDBsum" id="6YBS"/>
<dbReference type="PDBsum" id="6Z6L"/>
<dbReference type="PDBsum" id="6Z6M"/>
<dbReference type="PDBsum" id="6Z6N"/>
<dbReference type="PDBsum" id="6ZLW"/>
<dbReference type="PDBsum" id="6ZM7"/>
<dbReference type="PDBsum" id="6ZME"/>
<dbReference type="PDBsum" id="6ZMI"/>
<dbReference type="PDBsum" id="6ZMO"/>
<dbReference type="PDBsum" id="6ZMT"/>
<dbReference type="PDBsum" id="6ZMW"/>
<dbReference type="PDBsum" id="6ZN5"/>
<dbReference type="PDBsum" id="6ZOJ"/>
<dbReference type="PDBsum" id="6ZOL"/>
<dbReference type="PDBsum" id="6ZON"/>
<dbReference type="PDBsum" id="6ZP4"/>
<dbReference type="PDBsum" id="6ZUO"/>
<dbReference type="PDBsum" id="6ZV6"/>
<dbReference type="PDBsum" id="6ZVH"/>
<dbReference type="PDBsum" id="6ZVJ"/>
<dbReference type="PDBsum" id="6ZXD"/>
<dbReference type="PDBsum" id="6ZXE"/>
<dbReference type="PDBsum" id="6ZXF"/>
<dbReference type="PDBsum" id="6ZXG"/>
<dbReference type="PDBsum" id="6ZXH"/>
<dbReference type="PDBsum" id="7A09"/>
<dbReference type="PDBsum" id="7K5I"/>
<dbReference type="PDBsum" id="7QP6"/>
<dbReference type="PDBsum" id="7QP7"/>
<dbReference type="PDBsum" id="7QVP"/>
<dbReference type="PDBsum" id="7R4X"/>
<dbReference type="PDBsum" id="7TQL"/>
<dbReference type="PDBsum" id="7XNX"/>
<dbReference type="PDBsum" id="7XNY"/>
<dbReference type="PDBsum" id="8G5Y"/>
<dbReference type="PDBsum" id="8G5Z"/>
<dbReference type="PDBsum" id="8G60"/>
<dbReference type="PDBsum" id="8G61"/>
<dbReference type="PDBsum" id="8G6J"/>
<dbReference type="PDBsum" id="8GLP"/>
<dbReference type="PDBsum" id="8IFD"/>
<dbReference type="PDBsum" id="8IFE"/>
<dbReference type="PDBsum" id="8JDJ"/>
<dbReference type="PDBsum" id="8JDK"/>
<dbReference type="PDBsum" id="8JDL"/>
<dbReference type="PDBsum" id="8JDM"/>
<dbReference type="PDBsum" id="8K2C"/>
<dbReference type="PDBsum" id="8OZ0"/>
<dbReference type="PDBsum" id="8PJ1"/>
<dbReference type="PDBsum" id="8PJ2"/>
<dbReference type="PDBsum" id="8PJ3"/>
<dbReference type="PDBsum" id="8PJ4"/>
<dbReference type="PDBsum" id="8PJ5"/>
<dbReference type="PDBsum" id="8PJ6"/>
<dbReference type="PDBsum" id="8PPK"/>
<dbReference type="PDBsum" id="8PPL"/>
<dbReference type="PDBsum" id="8QOI"/>
<dbReference type="PDBsum" id="8T4S"/>
<dbReference type="PDBsum" id="8UKB"/>
<dbReference type="PDBsum" id="8XP2"/>
<dbReference type="PDBsum" id="8XP3"/>
<dbReference type="PDBsum" id="8XSX"/>
<dbReference type="PDBsum" id="8XSY"/>
<dbReference type="PDBsum" id="8XSZ"/>
<dbReference type="PDBsum" id="8XXL"/>
<dbReference type="PDBsum" id="8XXM"/>
<dbReference type="PDBsum" id="8XXN"/>
<dbReference type="PDBsum" id="8Y0W"/>
<dbReference type="PDBsum" id="8Y0X"/>
<dbReference type="PDBsum" id="8YOO"/>
<dbReference type="PDBsum" id="8YOP"/>
<dbReference type="PDBsum" id="8ZDB"/>
<dbReference type="PDBsum" id="8ZDC"/>
<dbReference type="PDBsum" id="8ZDD"/>
<dbReference type="PDBsum" id="9BKD"/>
<dbReference type="PDBsum" id="9BLN"/>
<dbReference type="PDBsum" id="9C3H"/>
<dbReference type="PDBsum" id="9G8M"/>
<dbReference type="PDBsum" id="9G8O"/>
<dbReference type="BMRB" id="P23396"/>
<dbReference type="EMDB" id="EMD-10668"/>
<dbReference type="EMDB" id="EMD-10674"/>
<dbReference type="EMDB" id="EMD-10690"/>
<dbReference type="EMDB" id="EMD-10772"/>
<dbReference type="EMDB" id="EMD-11098"/>
<dbReference type="EMDB" id="EMD-11099"/>
<dbReference type="EMDB" id="EMD-11100"/>
<dbReference type="EMDB" id="EMD-11276"/>
<dbReference type="EMDB" id="EMD-11288"/>
<dbReference type="EMDB" id="EMD-11289"/>
<dbReference type="EMDB" id="EMD-11292"/>
<dbReference type="EMDB" id="EMD-11299"/>
<dbReference type="EMDB" id="EMD-11301"/>
<dbReference type="EMDB" id="EMD-11302"/>
<dbReference type="EMDB" id="EMD-11310"/>
<dbReference type="EMDB" id="EMD-11320"/>
<dbReference type="EMDB" id="EMD-11322"/>
<dbReference type="EMDB" id="EMD-11325"/>
<dbReference type="EMDB" id="EMD-11335"/>
<dbReference type="EMDB" id="EMD-11440"/>
<dbReference type="EMDB" id="EMD-11441"/>
<dbReference type="EMDB" id="EMD-11456"/>
<dbReference type="EMDB" id="EMD-11458"/>
<dbReference type="EMDB" id="EMD-11517"/>
<dbReference type="EMDB" id="EMD-11518"/>
<dbReference type="EMDB" id="EMD-11519"/>
<dbReference type="EMDB" id="EMD-11520"/>
<dbReference type="EMDB" id="EMD-11521"/>
<dbReference type="EMDB" id="EMD-11602"/>
<dbReference type="EMDB" id="EMD-14113"/>
<dbReference type="EMDB" id="EMD-14114"/>
<dbReference type="EMDB" id="EMD-14181"/>
<dbReference type="EMDB" id="EMD-14317"/>
<dbReference type="EMDB" id="EMD-17297"/>
<dbReference type="EMDB" id="EMD-17696"/>
<dbReference type="EMDB" id="EMD-17697"/>
<dbReference type="EMDB" id="EMD-17698"/>
<dbReference type="EMDB" id="EMD-17699"/>
<dbReference type="EMDB" id="EMD-17700"/>
<dbReference type="EMDB" id="EMD-17701"/>
<dbReference type="EMDB" id="EMD-17804"/>
<dbReference type="EMDB" id="EMD-17805"/>
<dbReference type="EMDB" id="EMD-18539"/>
<dbReference type="EMDB" id="EMD-22681"/>
<dbReference type="EMDB" id="EMD-26067"/>
<dbReference type="EMDB" id="EMD-29757"/>
<dbReference type="EMDB" id="EMD-29758"/>
<dbReference type="EMDB" id="EMD-29759"/>
<dbReference type="EMDB" id="EMD-29760"/>
<dbReference type="EMDB" id="EMD-29771"/>
<dbReference type="EMDB" id="EMD-33329"/>
<dbReference type="EMDB" id="EMD-33330"/>
<dbReference type="EMDB" id="EMD-35413"/>
<dbReference type="EMDB" id="EMD-35414"/>
<dbReference type="EMDB" id="EMD-36178"/>
<dbReference type="EMDB" id="EMD-36179"/>
<dbReference type="EMDB" id="EMD-36180"/>
<dbReference type="EMDB" id="EMD-36181"/>
<dbReference type="EMDB" id="EMD-36838"/>
<dbReference type="EMDB" id="EMD-3770"/>
<dbReference type="EMDB" id="EMD-38548"/>
<dbReference type="EMDB" id="EMD-38549"/>
<dbReference type="EMDB" id="EMD-38629"/>
<dbReference type="EMDB" id="EMD-38630"/>
<dbReference type="EMDB" id="EMD-38631"/>
<dbReference type="EMDB" id="EMD-38752"/>
<dbReference type="EMDB" id="EMD-38753"/>
<dbReference type="EMDB" id="EMD-38754"/>
<dbReference type="EMDB" id="EMD-3883"/>
<dbReference type="EMDB" id="EMD-39455"/>
<dbReference type="EMDB" id="EMD-39456"/>
<dbReference type="EMDB" id="EMD-39956"/>
<dbReference type="EMDB" id="EMD-39957"/>
<dbReference type="EMDB" id="EMD-39958"/>
<dbReference type="EMDB" id="EMD-40205"/>
<dbReference type="EMDB" id="EMD-4070"/>
<dbReference type="EMDB" id="EMD-41039"/>
<dbReference type="EMDB" id="EMD-42351"/>
<dbReference type="EMDB" id="EMD-4242"/>
<dbReference type="EMDB" id="EMD-4350"/>
<dbReference type="EMDB" id="EMD-4351"/>
<dbReference type="EMDB" id="EMD-4352"/>
<dbReference type="EMDB" id="EMD-4353"/>
<dbReference type="EMDB" id="EMD-44641"/>
<dbReference type="EMDB" id="EMD-44671"/>
<dbReference type="EMDB" id="EMD-45170"/>
<dbReference type="EMDB" id="EMD-51132"/>
<dbReference type="EMDB" id="EMD-51134"/>
<dbReference type="EMDB" id="EMD-9701"/>
<dbReference type="EMDB" id="EMD-9702"/>
<dbReference type="EMDB" id="EMD-9703"/>
<dbReference type="SMR" id="P23396"/>
<dbReference type="BioGRID" id="112102">
    <property type="interactions" value="875"/>
</dbReference>
<dbReference type="ComplexPortal" id="CPX-5223">
    <property type="entry name" value="40S cytosolic small ribosomal subunit"/>
</dbReference>
<dbReference type="CORUM" id="P23396"/>
<dbReference type="DIP" id="DIP-33177N"/>
<dbReference type="ELM" id="P23396"/>
<dbReference type="FunCoup" id="P23396">
    <property type="interactions" value="2608"/>
</dbReference>
<dbReference type="IntAct" id="P23396">
    <property type="interactions" value="669"/>
</dbReference>
<dbReference type="MINT" id="P23396"/>
<dbReference type="STRING" id="9606.ENSP00000278572"/>
<dbReference type="MoonProt" id="P23396"/>
<dbReference type="GlyGen" id="P23396">
    <property type="glycosylation" value="2 sites, 1 O-linked glycan (1 site)"/>
</dbReference>
<dbReference type="iPTMnet" id="P23396"/>
<dbReference type="MetOSite" id="P23396"/>
<dbReference type="PhosphoSitePlus" id="P23396"/>
<dbReference type="SwissPalm" id="P23396"/>
<dbReference type="BioMuta" id="RPS3"/>
<dbReference type="DMDM" id="417719"/>
<dbReference type="jPOST" id="P23396"/>
<dbReference type="MassIVE" id="P23396"/>
<dbReference type="PaxDb" id="9606-ENSP00000278572"/>
<dbReference type="PeptideAtlas" id="P23396"/>
<dbReference type="PRIDE" id="P23396"/>
<dbReference type="ProteomicsDB" id="54087">
    <molecule id="P23396-1"/>
</dbReference>
<dbReference type="Pumba" id="P23396"/>
<dbReference type="Antibodypedia" id="31150">
    <property type="antibodies" value="352 antibodies from 36 providers"/>
</dbReference>
<dbReference type="DNASU" id="6188"/>
<dbReference type="Ensembl" id="ENST00000278572.10">
    <molecule id="P23396-2"/>
    <property type="protein sequence ID" value="ENSP00000278572.6"/>
    <property type="gene ID" value="ENSG00000149273.15"/>
</dbReference>
<dbReference type="Ensembl" id="ENST00000524851.5">
    <molecule id="P23396-1"/>
    <property type="protein sequence ID" value="ENSP00000433821.1"/>
    <property type="gene ID" value="ENSG00000149273.15"/>
</dbReference>
<dbReference type="Ensembl" id="ENST00000527446.5">
    <molecule id="P23396-1"/>
    <property type="protein sequence ID" value="ENSP00000436971.1"/>
    <property type="gene ID" value="ENSG00000149273.15"/>
</dbReference>
<dbReference type="Ensembl" id="ENST00000531188.6">
    <molecule id="P23396-1"/>
    <property type="protein sequence ID" value="ENSP00000434643.1"/>
    <property type="gene ID" value="ENSG00000149273.15"/>
</dbReference>
<dbReference type="GeneID" id="6188"/>
<dbReference type="KEGG" id="hsa:6188"/>
<dbReference type="MANE-Select" id="ENST00000531188.6">
    <property type="protein sequence ID" value="ENSP00000434643.1"/>
    <property type="RefSeq nucleotide sequence ID" value="NM_001005.5"/>
    <property type="RefSeq protein sequence ID" value="NP_000996.2"/>
</dbReference>
<dbReference type="UCSC" id="uc001owh.5">
    <molecule id="P23396-1"/>
    <property type="organism name" value="human"/>
</dbReference>
<dbReference type="AGR" id="HGNC:10420"/>
<dbReference type="CTD" id="6188"/>
<dbReference type="DisGeNET" id="6188"/>
<dbReference type="GeneCards" id="RPS3"/>
<dbReference type="HGNC" id="HGNC:10420">
    <property type="gene designation" value="RPS3"/>
</dbReference>
<dbReference type="HPA" id="ENSG00000149273">
    <property type="expression patterns" value="Low tissue specificity"/>
</dbReference>
<dbReference type="MIM" id="600454">
    <property type="type" value="gene"/>
</dbReference>
<dbReference type="neXtProt" id="NX_P23396"/>
<dbReference type="OpenTargets" id="ENSG00000149273"/>
<dbReference type="PharmGKB" id="PA34829"/>
<dbReference type="VEuPathDB" id="HostDB:ENSG00000149273"/>
<dbReference type="eggNOG" id="KOG3181">
    <property type="taxonomic scope" value="Eukaryota"/>
</dbReference>
<dbReference type="GeneTree" id="ENSGT00390000008610"/>
<dbReference type="HOGENOM" id="CLU_058591_2_1_1"/>
<dbReference type="InParanoid" id="P23396"/>
<dbReference type="OMA" id="NKKKWMI"/>
<dbReference type="OrthoDB" id="10248446at2759"/>
<dbReference type="PAN-GO" id="P23396">
    <property type="GO annotations" value="4 GO annotations based on evolutionary models"/>
</dbReference>
<dbReference type="PhylomeDB" id="P23396"/>
<dbReference type="TreeFam" id="TF300901"/>
<dbReference type="PathwayCommons" id="P23396"/>
<dbReference type="Reactome" id="R-HSA-156827">
    <property type="pathway name" value="L13a-mediated translational silencing of Ceruloplasmin expression"/>
</dbReference>
<dbReference type="Reactome" id="R-HSA-156902">
    <property type="pathway name" value="Peptide chain elongation"/>
</dbReference>
<dbReference type="Reactome" id="R-HSA-1799339">
    <property type="pathway name" value="SRP-dependent cotranslational protein targeting to membrane"/>
</dbReference>
<dbReference type="Reactome" id="R-HSA-192823">
    <property type="pathway name" value="Viral mRNA Translation"/>
</dbReference>
<dbReference type="Reactome" id="R-HSA-2408557">
    <property type="pathway name" value="Selenocysteine synthesis"/>
</dbReference>
<dbReference type="Reactome" id="R-HSA-6791226">
    <property type="pathway name" value="Major pathway of rRNA processing in the nucleolus and cytosol"/>
</dbReference>
<dbReference type="Reactome" id="R-HSA-72649">
    <property type="pathway name" value="Translation initiation complex formation"/>
</dbReference>
<dbReference type="Reactome" id="R-HSA-72689">
    <property type="pathway name" value="Formation of a pool of free 40S subunits"/>
</dbReference>
<dbReference type="Reactome" id="R-HSA-72695">
    <property type="pathway name" value="Formation of the ternary complex, and subsequently, the 43S complex"/>
</dbReference>
<dbReference type="Reactome" id="R-HSA-72702">
    <property type="pathway name" value="Ribosomal scanning and start codon recognition"/>
</dbReference>
<dbReference type="Reactome" id="R-HSA-72706">
    <property type="pathway name" value="GTP hydrolysis and joining of the 60S ribosomal subunit"/>
</dbReference>
<dbReference type="Reactome" id="R-HSA-72764">
    <property type="pathway name" value="Eukaryotic Translation Termination"/>
</dbReference>
<dbReference type="Reactome" id="R-HSA-9010553">
    <property type="pathway name" value="Regulation of expression of SLITs and ROBOs"/>
</dbReference>
<dbReference type="Reactome" id="R-HSA-9633012">
    <property type="pathway name" value="Response of EIF2AK4 (GCN2) to amino acid deficiency"/>
</dbReference>
<dbReference type="Reactome" id="R-HSA-9735869">
    <property type="pathway name" value="SARS-CoV-1 modulates host translation machinery"/>
</dbReference>
<dbReference type="Reactome" id="R-HSA-9754678">
    <property type="pathway name" value="SARS-CoV-2 modulates host translation machinery"/>
</dbReference>
<dbReference type="Reactome" id="R-HSA-975956">
    <property type="pathway name" value="Nonsense Mediated Decay (NMD) independent of the Exon Junction Complex (EJC)"/>
</dbReference>
<dbReference type="Reactome" id="R-HSA-975957">
    <property type="pathway name" value="Nonsense Mediated Decay (NMD) enhanced by the Exon Junction Complex (EJC)"/>
</dbReference>
<dbReference type="SignaLink" id="P23396"/>
<dbReference type="SIGNOR" id="P23396"/>
<dbReference type="BioGRID-ORCS" id="6188">
    <property type="hits" value="823 hits in 1124 CRISPR screens"/>
</dbReference>
<dbReference type="CD-CODE" id="232F8A39">
    <property type="entry name" value="P-body"/>
</dbReference>
<dbReference type="CD-CODE" id="91857CE7">
    <property type="entry name" value="Nucleolus"/>
</dbReference>
<dbReference type="CD-CODE" id="DEE660B4">
    <property type="entry name" value="Stress granule"/>
</dbReference>
<dbReference type="CD-CODE" id="F85A2E29">
    <property type="entry name" value="IMP1 RNP granule"/>
</dbReference>
<dbReference type="CD-CODE" id="FB4E32DD">
    <property type="entry name" value="Presynaptic clusters and postsynaptic densities"/>
</dbReference>
<dbReference type="ChiTaRS" id="RPS3">
    <property type="organism name" value="human"/>
</dbReference>
<dbReference type="EvolutionaryTrace" id="P23396"/>
<dbReference type="GeneWiki" id="RPS3"/>
<dbReference type="GenomeRNAi" id="6188"/>
<dbReference type="Pharos" id="P23396">
    <property type="development level" value="Tbio"/>
</dbReference>
<dbReference type="PRO" id="PR:P23396"/>
<dbReference type="Proteomes" id="UP000005640">
    <property type="component" value="Chromosome 11"/>
</dbReference>
<dbReference type="RNAct" id="P23396">
    <property type="molecule type" value="protein"/>
</dbReference>
<dbReference type="Bgee" id="ENSG00000149273">
    <property type="expression patterns" value="Expressed in left ovary and 104 other cell types or tissues"/>
</dbReference>
<dbReference type="ExpressionAtlas" id="P23396">
    <property type="expression patterns" value="baseline and differential"/>
</dbReference>
<dbReference type="GO" id="GO:0005737">
    <property type="term" value="C:cytoplasm"/>
    <property type="evidence" value="ECO:0000314"/>
    <property type="project" value="UniProtKB"/>
</dbReference>
<dbReference type="GO" id="GO:0005829">
    <property type="term" value="C:cytosol"/>
    <property type="evidence" value="ECO:0000314"/>
    <property type="project" value="HPA"/>
</dbReference>
<dbReference type="GO" id="GO:0022626">
    <property type="term" value="C:cytosolic ribosome"/>
    <property type="evidence" value="ECO:0000314"/>
    <property type="project" value="FlyBase"/>
</dbReference>
<dbReference type="GO" id="GO:0022627">
    <property type="term" value="C:cytosolic small ribosomal subunit"/>
    <property type="evidence" value="ECO:0000314"/>
    <property type="project" value="UniProtKB"/>
</dbReference>
<dbReference type="GO" id="GO:0005783">
    <property type="term" value="C:endoplasmic reticulum"/>
    <property type="evidence" value="ECO:0000314"/>
    <property type="project" value="HPA"/>
</dbReference>
<dbReference type="GO" id="GO:0070062">
    <property type="term" value="C:extracellular exosome"/>
    <property type="evidence" value="ECO:0007005"/>
    <property type="project" value="UniProtKB"/>
</dbReference>
<dbReference type="GO" id="GO:0005925">
    <property type="term" value="C:focal adhesion"/>
    <property type="evidence" value="ECO:0007005"/>
    <property type="project" value="UniProtKB"/>
</dbReference>
<dbReference type="GO" id="GO:0016020">
    <property type="term" value="C:membrane"/>
    <property type="evidence" value="ECO:0007005"/>
    <property type="project" value="UniProtKB"/>
</dbReference>
<dbReference type="GO" id="GO:0005743">
    <property type="term" value="C:mitochondrial inner membrane"/>
    <property type="evidence" value="ECO:0000314"/>
    <property type="project" value="UniProtKB"/>
</dbReference>
<dbReference type="GO" id="GO:0005759">
    <property type="term" value="C:mitochondrial matrix"/>
    <property type="evidence" value="ECO:0000314"/>
    <property type="project" value="UniProtKB"/>
</dbReference>
<dbReference type="GO" id="GO:0072686">
    <property type="term" value="C:mitotic spindle"/>
    <property type="evidence" value="ECO:0000314"/>
    <property type="project" value="UniProtKB"/>
</dbReference>
<dbReference type="GO" id="GO:0071159">
    <property type="term" value="C:NF-kappaB complex"/>
    <property type="evidence" value="ECO:0000314"/>
    <property type="project" value="CAFA"/>
</dbReference>
<dbReference type="GO" id="GO:0005730">
    <property type="term" value="C:nucleolus"/>
    <property type="evidence" value="ECO:0000314"/>
    <property type="project" value="UniProtKB"/>
</dbReference>
<dbReference type="GO" id="GO:0005654">
    <property type="term" value="C:nucleoplasm"/>
    <property type="evidence" value="ECO:0000304"/>
    <property type="project" value="Reactome"/>
</dbReference>
<dbReference type="GO" id="GO:0005634">
    <property type="term" value="C:nucleus"/>
    <property type="evidence" value="ECO:0000314"/>
    <property type="project" value="UniProtKB"/>
</dbReference>
<dbReference type="GO" id="GO:0005886">
    <property type="term" value="C:plasma membrane"/>
    <property type="evidence" value="ECO:0000314"/>
    <property type="project" value="UniProtKB"/>
</dbReference>
<dbReference type="GO" id="GO:0014069">
    <property type="term" value="C:postsynaptic density"/>
    <property type="evidence" value="ECO:0000314"/>
    <property type="project" value="SynGO"/>
</dbReference>
<dbReference type="GO" id="GO:1990904">
    <property type="term" value="C:ribonucleoprotein complex"/>
    <property type="evidence" value="ECO:0000314"/>
    <property type="project" value="UniProtKB"/>
</dbReference>
<dbReference type="GO" id="GO:0005840">
    <property type="term" value="C:ribosome"/>
    <property type="evidence" value="ECO:0000314"/>
    <property type="project" value="UniProtKB"/>
</dbReference>
<dbReference type="GO" id="GO:0032587">
    <property type="term" value="C:ruffle membrane"/>
    <property type="evidence" value="ECO:0000314"/>
    <property type="project" value="UniProtKB"/>
</dbReference>
<dbReference type="GO" id="GO:0140078">
    <property type="term" value="F:class I DNA-(apurinic or apyrimidinic site) endonuclease activity"/>
    <property type="evidence" value="ECO:0007669"/>
    <property type="project" value="UniProtKB-EC"/>
</dbReference>
<dbReference type="GO" id="GO:0003684">
    <property type="term" value="F:damaged DNA binding"/>
    <property type="evidence" value="ECO:0000314"/>
    <property type="project" value="UniProtKB"/>
</dbReference>
<dbReference type="GO" id="GO:0003677">
    <property type="term" value="F:DNA binding"/>
    <property type="evidence" value="ECO:0000314"/>
    <property type="project" value="UniProtKB"/>
</dbReference>
<dbReference type="GO" id="GO:0004520">
    <property type="term" value="F:DNA endonuclease activity"/>
    <property type="evidence" value="ECO:0000314"/>
    <property type="project" value="UniProtKB"/>
</dbReference>
<dbReference type="GO" id="GO:0003906">
    <property type="term" value="F:DNA-(apurinic or apyrimidinic site) endonuclease activity"/>
    <property type="evidence" value="ECO:0000314"/>
    <property type="project" value="UniProtKB"/>
</dbReference>
<dbReference type="GO" id="GO:0140297">
    <property type="term" value="F:DNA-binding transcription factor binding"/>
    <property type="evidence" value="ECO:0000353"/>
    <property type="project" value="UniProtKB"/>
</dbReference>
<dbReference type="GO" id="GO:0019899">
    <property type="term" value="F:enzyme binding"/>
    <property type="evidence" value="ECO:0000353"/>
    <property type="project" value="UniProtKB"/>
</dbReference>
<dbReference type="GO" id="GO:0030544">
    <property type="term" value="F:Hsp70 protein binding"/>
    <property type="evidence" value="ECO:0000314"/>
    <property type="project" value="UniProtKB"/>
</dbReference>
<dbReference type="GO" id="GO:0051879">
    <property type="term" value="F:Hsp90 protein binding"/>
    <property type="evidence" value="ECO:0000314"/>
    <property type="project" value="UniProtKB"/>
</dbReference>
<dbReference type="GO" id="GO:0051536">
    <property type="term" value="F:iron-sulfur cluster binding"/>
    <property type="evidence" value="ECO:0000303"/>
    <property type="project" value="UniProtKB"/>
</dbReference>
<dbReference type="GO" id="GO:0019900">
    <property type="term" value="F:kinase binding"/>
    <property type="evidence" value="ECO:0000353"/>
    <property type="project" value="UniProtKB"/>
</dbReference>
<dbReference type="GO" id="GO:0008017">
    <property type="term" value="F:microtubule binding"/>
    <property type="evidence" value="ECO:0000314"/>
    <property type="project" value="UniProtKB"/>
</dbReference>
<dbReference type="GO" id="GO:0003729">
    <property type="term" value="F:mRNA binding"/>
    <property type="evidence" value="ECO:0000314"/>
    <property type="project" value="UniProtKB"/>
</dbReference>
<dbReference type="GO" id="GO:0032357">
    <property type="term" value="F:oxidized purine DNA binding"/>
    <property type="evidence" value="ECO:0000314"/>
    <property type="project" value="UniProtKB"/>
</dbReference>
<dbReference type="GO" id="GO:0032358">
    <property type="term" value="F:oxidized pyrimidine DNA binding"/>
    <property type="evidence" value="ECO:0000314"/>
    <property type="project" value="UniProtKB"/>
</dbReference>
<dbReference type="GO" id="GO:0051018">
    <property type="term" value="F:protein kinase A binding"/>
    <property type="evidence" value="ECO:0000353"/>
    <property type="project" value="UniProtKB"/>
</dbReference>
<dbReference type="GO" id="GO:0019901">
    <property type="term" value="F:protein kinase binding"/>
    <property type="evidence" value="ECO:0000353"/>
    <property type="project" value="UniProtKB"/>
</dbReference>
<dbReference type="GO" id="GO:0044877">
    <property type="term" value="F:protein-containing complex binding"/>
    <property type="evidence" value="ECO:0000315"/>
    <property type="project" value="CAFA"/>
</dbReference>
<dbReference type="GO" id="GO:0003723">
    <property type="term" value="F:RNA binding"/>
    <property type="evidence" value="ECO:0000314"/>
    <property type="project" value="UniProtKB"/>
</dbReference>
<dbReference type="GO" id="GO:0070181">
    <property type="term" value="F:small ribosomal subunit rRNA binding"/>
    <property type="evidence" value="ECO:0000314"/>
    <property type="project" value="UniProtKB"/>
</dbReference>
<dbReference type="GO" id="GO:0003735">
    <property type="term" value="F:structural constituent of ribosome"/>
    <property type="evidence" value="ECO:0000314"/>
    <property type="project" value="FlyBase"/>
</dbReference>
<dbReference type="GO" id="GO:0097100">
    <property type="term" value="F:supercoiled DNA binding"/>
    <property type="evidence" value="ECO:0000314"/>
    <property type="project" value="UniProtKB"/>
</dbReference>
<dbReference type="GO" id="GO:0015631">
    <property type="term" value="F:tubulin binding"/>
    <property type="evidence" value="ECO:0000314"/>
    <property type="project" value="UniProtKB"/>
</dbReference>
<dbReference type="GO" id="GO:0044390">
    <property type="term" value="F:ubiquitin-like protein conjugating enzyme binding"/>
    <property type="evidence" value="ECO:0000353"/>
    <property type="project" value="UniProtKB"/>
</dbReference>
<dbReference type="GO" id="GO:0006915">
    <property type="term" value="P:apoptotic process"/>
    <property type="evidence" value="ECO:0007669"/>
    <property type="project" value="UniProtKB-KW"/>
</dbReference>
<dbReference type="GO" id="GO:0006284">
    <property type="term" value="P:base-excision repair"/>
    <property type="evidence" value="ECO:0000314"/>
    <property type="project" value="GO_Central"/>
</dbReference>
<dbReference type="GO" id="GO:0051301">
    <property type="term" value="P:cell division"/>
    <property type="evidence" value="ECO:0007669"/>
    <property type="project" value="UniProtKB-KW"/>
</dbReference>
<dbReference type="GO" id="GO:0070301">
    <property type="term" value="P:cellular response to hydrogen peroxide"/>
    <property type="evidence" value="ECO:0000314"/>
    <property type="project" value="UniProtKB"/>
</dbReference>
<dbReference type="GO" id="GO:0034614">
    <property type="term" value="P:cellular response to reactive oxygen species"/>
    <property type="evidence" value="ECO:0000314"/>
    <property type="project" value="UniProtKB"/>
</dbReference>
<dbReference type="GO" id="GO:0071356">
    <property type="term" value="P:cellular response to tumor necrosis factor"/>
    <property type="evidence" value="ECO:0000315"/>
    <property type="project" value="CAFA"/>
</dbReference>
<dbReference type="GO" id="GO:0007059">
    <property type="term" value="P:chromosome segregation"/>
    <property type="evidence" value="ECO:0000315"/>
    <property type="project" value="UniProtKB"/>
</dbReference>
<dbReference type="GO" id="GO:0002181">
    <property type="term" value="P:cytoplasmic translation"/>
    <property type="evidence" value="ECO:0000303"/>
    <property type="project" value="ComplexPortal"/>
</dbReference>
<dbReference type="GO" id="GO:0006974">
    <property type="term" value="P:DNA damage response"/>
    <property type="evidence" value="ECO:0000270"/>
    <property type="project" value="UniProtKB"/>
</dbReference>
<dbReference type="GO" id="GO:0006281">
    <property type="term" value="P:DNA repair"/>
    <property type="evidence" value="ECO:0000315"/>
    <property type="project" value="UniProtKB"/>
</dbReference>
<dbReference type="GO" id="GO:0045738">
    <property type="term" value="P:negative regulation of DNA repair"/>
    <property type="evidence" value="ECO:0000315"/>
    <property type="project" value="UniProtKB"/>
</dbReference>
<dbReference type="GO" id="GO:0031397">
    <property type="term" value="P:negative regulation of protein ubiquitination"/>
    <property type="evidence" value="ECO:0000314"/>
    <property type="project" value="UniProtKB"/>
</dbReference>
<dbReference type="GO" id="GO:0017148">
    <property type="term" value="P:negative regulation of translation"/>
    <property type="evidence" value="ECO:0000314"/>
    <property type="project" value="UniProtKB"/>
</dbReference>
<dbReference type="GO" id="GO:0042104">
    <property type="term" value="P:positive regulation of activated T cell proliferation"/>
    <property type="evidence" value="ECO:0000315"/>
    <property type="project" value="CAFA"/>
</dbReference>
<dbReference type="GO" id="GO:2001235">
    <property type="term" value="P:positive regulation of apoptotic signaling pathway"/>
    <property type="evidence" value="ECO:0000314"/>
    <property type="project" value="UniProtKB"/>
</dbReference>
<dbReference type="GO" id="GO:1905053">
    <property type="term" value="P:positive regulation of base-excision repair"/>
    <property type="evidence" value="ECO:0000314"/>
    <property type="project" value="UniProtKB"/>
</dbReference>
<dbReference type="GO" id="GO:0045739">
    <property type="term" value="P:positive regulation of DNA repair"/>
    <property type="evidence" value="ECO:0000314"/>
    <property type="project" value="UniProtKB"/>
</dbReference>
<dbReference type="GO" id="GO:0032079">
    <property type="term" value="P:positive regulation of endodeoxyribonuclease activity"/>
    <property type="evidence" value="ECO:0000314"/>
    <property type="project" value="UniProtKB"/>
</dbReference>
<dbReference type="GO" id="GO:0010628">
    <property type="term" value="P:positive regulation of gene expression"/>
    <property type="evidence" value="ECO:0000315"/>
    <property type="project" value="UniProtKB"/>
</dbReference>
<dbReference type="GO" id="GO:0032743">
    <property type="term" value="P:positive regulation of interleukin-2 production"/>
    <property type="evidence" value="ECO:0000315"/>
    <property type="project" value="CAFA"/>
</dbReference>
<dbReference type="GO" id="GO:1902231">
    <property type="term" value="P:positive regulation of intrinsic apoptotic signaling pathway in response to DNA damage"/>
    <property type="evidence" value="ECO:0000315"/>
    <property type="project" value="UniProtKB"/>
</dbReference>
<dbReference type="GO" id="GO:0031116">
    <property type="term" value="P:positive regulation of microtubule polymerization"/>
    <property type="evidence" value="ECO:0000315"/>
    <property type="project" value="UniProtKB"/>
</dbReference>
<dbReference type="GO" id="GO:0051092">
    <property type="term" value="P:positive regulation of NF-kappaB transcription factor activity"/>
    <property type="evidence" value="ECO:0000315"/>
    <property type="project" value="CAFA"/>
</dbReference>
<dbReference type="GO" id="GO:1901224">
    <property type="term" value="P:positive regulation of non-canonical NF-kappaB signal transduction"/>
    <property type="evidence" value="ECO:0000314"/>
    <property type="project" value="UniProtKB"/>
</dbReference>
<dbReference type="GO" id="GO:0031334">
    <property type="term" value="P:positive regulation of protein-containing complex assembly"/>
    <property type="evidence" value="ECO:0000315"/>
    <property type="project" value="CAFA"/>
</dbReference>
<dbReference type="GO" id="GO:0050862">
    <property type="term" value="P:positive regulation of T cell receptor signaling pathway"/>
    <property type="evidence" value="ECO:0000315"/>
    <property type="project" value="CAFA"/>
</dbReference>
<dbReference type="GO" id="GO:0042981">
    <property type="term" value="P:regulation of apoptotic process"/>
    <property type="evidence" value="ECO:0000315"/>
    <property type="project" value="UniProtKB"/>
</dbReference>
<dbReference type="GO" id="GO:0061481">
    <property type="term" value="P:response to TNF agonist"/>
    <property type="evidence" value="ECO:0000314"/>
    <property type="project" value="UniProtKB"/>
</dbReference>
<dbReference type="GO" id="GO:0051225">
    <property type="term" value="P:spindle assembly"/>
    <property type="evidence" value="ECO:0000315"/>
    <property type="project" value="UniProtKB"/>
</dbReference>
<dbReference type="GO" id="GO:0006412">
    <property type="term" value="P:translation"/>
    <property type="evidence" value="ECO:0000303"/>
    <property type="project" value="UniProtKB"/>
</dbReference>
<dbReference type="GO" id="GO:0006413">
    <property type="term" value="P:translational initiation"/>
    <property type="evidence" value="ECO:0000303"/>
    <property type="project" value="UniProtKB"/>
</dbReference>
<dbReference type="CDD" id="cd02413">
    <property type="entry name" value="KH-II_40S_S3"/>
    <property type="match status" value="1"/>
</dbReference>
<dbReference type="FunFam" id="3.30.1140.32:FF:000005">
    <property type="entry name" value="40S ribosomal protein S3"/>
    <property type="match status" value="1"/>
</dbReference>
<dbReference type="FunFam" id="3.30.300.20:FF:000006">
    <property type="entry name" value="40S ribosomal protein S3"/>
    <property type="match status" value="1"/>
</dbReference>
<dbReference type="Gene3D" id="3.30.300.20">
    <property type="match status" value="1"/>
</dbReference>
<dbReference type="Gene3D" id="3.30.1140.32">
    <property type="entry name" value="Ribosomal protein S3, C-terminal domain"/>
    <property type="match status" value="1"/>
</dbReference>
<dbReference type="InterPro" id="IPR015946">
    <property type="entry name" value="KH_dom-like_a/b"/>
</dbReference>
<dbReference type="InterPro" id="IPR004044">
    <property type="entry name" value="KH_dom_type_2"/>
</dbReference>
<dbReference type="InterPro" id="IPR009019">
    <property type="entry name" value="KH_sf_prok-type"/>
</dbReference>
<dbReference type="InterPro" id="IPR036419">
    <property type="entry name" value="Ribosomal_S3_C_sf"/>
</dbReference>
<dbReference type="InterPro" id="IPR001351">
    <property type="entry name" value="Ribosomal_uS3_C"/>
</dbReference>
<dbReference type="InterPro" id="IPR018280">
    <property type="entry name" value="Ribosomal_uS3_CS"/>
</dbReference>
<dbReference type="InterPro" id="IPR005703">
    <property type="entry name" value="Ribosomal_uS3_euk/arc"/>
</dbReference>
<dbReference type="NCBIfam" id="NF003219">
    <property type="entry name" value="PRK04191.1"/>
    <property type="match status" value="1"/>
</dbReference>
<dbReference type="NCBIfam" id="TIGR01008">
    <property type="entry name" value="uS3_euk_arch"/>
    <property type="match status" value="1"/>
</dbReference>
<dbReference type="PANTHER" id="PTHR11760">
    <property type="entry name" value="30S/40S RIBOSOMAL PROTEIN S3"/>
    <property type="match status" value="1"/>
</dbReference>
<dbReference type="PANTHER" id="PTHR11760:SF32">
    <property type="entry name" value="SMALL RIBOSOMAL SUBUNIT PROTEIN US3"/>
    <property type="match status" value="1"/>
</dbReference>
<dbReference type="Pfam" id="PF07650">
    <property type="entry name" value="KH_2"/>
    <property type="match status" value="1"/>
</dbReference>
<dbReference type="Pfam" id="PF00189">
    <property type="entry name" value="Ribosomal_S3_C"/>
    <property type="match status" value="1"/>
</dbReference>
<dbReference type="SUPFAM" id="SSF54814">
    <property type="entry name" value="Prokaryotic type KH domain (KH-domain type II)"/>
    <property type="match status" value="1"/>
</dbReference>
<dbReference type="SUPFAM" id="SSF54821">
    <property type="entry name" value="Ribosomal protein S3 C-terminal domain"/>
    <property type="match status" value="1"/>
</dbReference>
<dbReference type="PROSITE" id="PS50823">
    <property type="entry name" value="KH_TYPE_2"/>
    <property type="match status" value="1"/>
</dbReference>
<dbReference type="PROSITE" id="PS00548">
    <property type="entry name" value="RIBOSOMAL_S3"/>
    <property type="match status" value="1"/>
</dbReference>
<gene>
    <name evidence="44" type="primary">RPS3</name>
    <name type="ORF">OK/SW-cl.26</name>
</gene>
<reference key="1">
    <citation type="journal article" date="1990" name="Nucleic Acids Res.">
        <title>Isolation of a cDNA encoding human 40S ribosomal protein s3.</title>
        <authorList>
            <person name="Zhang X.T."/>
            <person name="Tan Y.M."/>
            <person name="Tan Y.H."/>
        </authorList>
    </citation>
    <scope>NUCLEOTIDE SEQUENCE [MRNA] (ISOFORM 1)</scope>
</reference>
<reference key="2">
    <citation type="journal article" date="1991" name="Mol. Cell. Biol.">
        <title>Ribosomal protein genes are overexpressed in colorectal cancer: isolation of a cDNA clone encoding the human S3 ribosomal protein.</title>
        <authorList>
            <person name="Pogue-Geile K."/>
            <person name="Geiser J.R."/>
            <person name="Shu M."/>
            <person name="Miller C."/>
            <person name="Wool I.G."/>
            <person name="Meisler A.I."/>
            <person name="Pipas J.M."/>
        </authorList>
    </citation>
    <scope>NUCLEOTIDE SEQUENCE [MRNA] (ISOFORM 1)</scope>
</reference>
<reference key="3">
    <citation type="journal article" date="2002" name="Genome Res.">
        <title>The human ribosomal protein genes: sequencing and comparative analysis of 73 genes.</title>
        <authorList>
            <person name="Yoshihama M."/>
            <person name="Uechi T."/>
            <person name="Asakawa S."/>
            <person name="Kawasaki K."/>
            <person name="Kato S."/>
            <person name="Higa S."/>
            <person name="Maeda N."/>
            <person name="Minoshima S."/>
            <person name="Tanaka T."/>
            <person name="Shimizu N."/>
            <person name="Kenmochi N."/>
        </authorList>
    </citation>
    <scope>NUCLEOTIDE SEQUENCE [GENOMIC DNA]</scope>
</reference>
<reference key="4">
    <citation type="submission" date="2004-10" db="EMBL/GenBank/DDBJ databases">
        <authorList>
            <consortium name="NIEHS SNPs program"/>
        </authorList>
    </citation>
    <scope>NUCLEOTIDE SEQUENCE [GENOMIC DNA]</scope>
</reference>
<reference key="5">
    <citation type="journal article" date="2004" name="Nat. Genet.">
        <title>Complete sequencing and characterization of 21,243 full-length human cDNAs.</title>
        <authorList>
            <person name="Ota T."/>
            <person name="Suzuki Y."/>
            <person name="Nishikawa T."/>
            <person name="Otsuki T."/>
            <person name="Sugiyama T."/>
            <person name="Irie R."/>
            <person name="Wakamatsu A."/>
            <person name="Hayashi K."/>
            <person name="Sato H."/>
            <person name="Nagai K."/>
            <person name="Kimura K."/>
            <person name="Makita H."/>
            <person name="Sekine M."/>
            <person name="Obayashi M."/>
            <person name="Nishi T."/>
            <person name="Shibahara T."/>
            <person name="Tanaka T."/>
            <person name="Ishii S."/>
            <person name="Yamamoto J."/>
            <person name="Saito K."/>
            <person name="Kawai Y."/>
            <person name="Isono Y."/>
            <person name="Nakamura Y."/>
            <person name="Nagahari K."/>
            <person name="Murakami K."/>
            <person name="Yasuda T."/>
            <person name="Iwayanagi T."/>
            <person name="Wagatsuma M."/>
            <person name="Shiratori A."/>
            <person name="Sudo H."/>
            <person name="Hosoiri T."/>
            <person name="Kaku Y."/>
            <person name="Kodaira H."/>
            <person name="Kondo H."/>
            <person name="Sugawara M."/>
            <person name="Takahashi M."/>
            <person name="Kanda K."/>
            <person name="Yokoi T."/>
            <person name="Furuya T."/>
            <person name="Kikkawa E."/>
            <person name="Omura Y."/>
            <person name="Abe K."/>
            <person name="Kamihara K."/>
            <person name="Katsuta N."/>
            <person name="Sato K."/>
            <person name="Tanikawa M."/>
            <person name="Yamazaki M."/>
            <person name="Ninomiya K."/>
            <person name="Ishibashi T."/>
            <person name="Yamashita H."/>
            <person name="Murakawa K."/>
            <person name="Fujimori K."/>
            <person name="Tanai H."/>
            <person name="Kimata M."/>
            <person name="Watanabe M."/>
            <person name="Hiraoka S."/>
            <person name="Chiba Y."/>
            <person name="Ishida S."/>
            <person name="Ono Y."/>
            <person name="Takiguchi S."/>
            <person name="Watanabe S."/>
            <person name="Yosida M."/>
            <person name="Hotuta T."/>
            <person name="Kusano J."/>
            <person name="Kanehori K."/>
            <person name="Takahashi-Fujii A."/>
            <person name="Hara H."/>
            <person name="Tanase T.-O."/>
            <person name="Nomura Y."/>
            <person name="Togiya S."/>
            <person name="Komai F."/>
            <person name="Hara R."/>
            <person name="Takeuchi K."/>
            <person name="Arita M."/>
            <person name="Imose N."/>
            <person name="Musashino K."/>
            <person name="Yuuki H."/>
            <person name="Oshima A."/>
            <person name="Sasaki N."/>
            <person name="Aotsuka S."/>
            <person name="Yoshikawa Y."/>
            <person name="Matsunawa H."/>
            <person name="Ichihara T."/>
            <person name="Shiohata N."/>
            <person name="Sano S."/>
            <person name="Moriya S."/>
            <person name="Momiyama H."/>
            <person name="Satoh N."/>
            <person name="Takami S."/>
            <person name="Terashima Y."/>
            <person name="Suzuki O."/>
            <person name="Nakagawa S."/>
            <person name="Senoh A."/>
            <person name="Mizoguchi H."/>
            <person name="Goto Y."/>
            <person name="Shimizu F."/>
            <person name="Wakebe H."/>
            <person name="Hishigaki H."/>
            <person name="Watanabe T."/>
            <person name="Sugiyama A."/>
            <person name="Takemoto M."/>
            <person name="Kawakami B."/>
            <person name="Yamazaki M."/>
            <person name="Watanabe K."/>
            <person name="Kumagai A."/>
            <person name="Itakura S."/>
            <person name="Fukuzumi Y."/>
            <person name="Fujimori Y."/>
            <person name="Komiyama M."/>
            <person name="Tashiro H."/>
            <person name="Tanigami A."/>
            <person name="Fujiwara T."/>
            <person name="Ono T."/>
            <person name="Yamada K."/>
            <person name="Fujii Y."/>
            <person name="Ozaki K."/>
            <person name="Hirao M."/>
            <person name="Ohmori Y."/>
            <person name="Kawabata A."/>
            <person name="Hikiji T."/>
            <person name="Kobatake N."/>
            <person name="Inagaki H."/>
            <person name="Ikema Y."/>
            <person name="Okamoto S."/>
            <person name="Okitani R."/>
            <person name="Kawakami T."/>
            <person name="Noguchi S."/>
            <person name="Itoh T."/>
            <person name="Shigeta K."/>
            <person name="Senba T."/>
            <person name="Matsumura K."/>
            <person name="Nakajima Y."/>
            <person name="Mizuno T."/>
            <person name="Morinaga M."/>
            <person name="Sasaki M."/>
            <person name="Togashi T."/>
            <person name="Oyama M."/>
            <person name="Hata H."/>
            <person name="Watanabe M."/>
            <person name="Komatsu T."/>
            <person name="Mizushima-Sugano J."/>
            <person name="Satoh T."/>
            <person name="Shirai Y."/>
            <person name="Takahashi Y."/>
            <person name="Nakagawa K."/>
            <person name="Okumura K."/>
            <person name="Nagase T."/>
            <person name="Nomura N."/>
            <person name="Kikuchi H."/>
            <person name="Masuho Y."/>
            <person name="Yamashita R."/>
            <person name="Nakai K."/>
            <person name="Yada T."/>
            <person name="Nakamura Y."/>
            <person name="Ohara O."/>
            <person name="Isogai T."/>
            <person name="Sugano S."/>
        </authorList>
    </citation>
    <scope>NUCLEOTIDE SEQUENCE [LARGE SCALE MRNA] (ISOFORM 1)</scope>
    <source>
        <tissue>Brain</tissue>
    </source>
</reference>
<reference key="6">
    <citation type="journal article" date="2006" name="Nature">
        <title>Human chromosome 11 DNA sequence and analysis including novel gene identification.</title>
        <authorList>
            <person name="Taylor T.D."/>
            <person name="Noguchi H."/>
            <person name="Totoki Y."/>
            <person name="Toyoda A."/>
            <person name="Kuroki Y."/>
            <person name="Dewar K."/>
            <person name="Lloyd C."/>
            <person name="Itoh T."/>
            <person name="Takeda T."/>
            <person name="Kim D.-W."/>
            <person name="She X."/>
            <person name="Barlow K.F."/>
            <person name="Bloom T."/>
            <person name="Bruford E."/>
            <person name="Chang J.L."/>
            <person name="Cuomo C.A."/>
            <person name="Eichler E."/>
            <person name="FitzGerald M.G."/>
            <person name="Jaffe D.B."/>
            <person name="LaButti K."/>
            <person name="Nicol R."/>
            <person name="Park H.-S."/>
            <person name="Seaman C."/>
            <person name="Sougnez C."/>
            <person name="Yang X."/>
            <person name="Zimmer A.R."/>
            <person name="Zody M.C."/>
            <person name="Birren B.W."/>
            <person name="Nusbaum C."/>
            <person name="Fujiyama A."/>
            <person name="Hattori M."/>
            <person name="Rogers J."/>
            <person name="Lander E.S."/>
            <person name="Sakaki Y."/>
        </authorList>
    </citation>
    <scope>NUCLEOTIDE SEQUENCE [LARGE SCALE GENOMIC DNA]</scope>
</reference>
<reference key="7">
    <citation type="submission" date="2005-07" db="EMBL/GenBank/DDBJ databases">
        <authorList>
            <person name="Mural R.J."/>
            <person name="Istrail S."/>
            <person name="Sutton G.G."/>
            <person name="Florea L."/>
            <person name="Halpern A.L."/>
            <person name="Mobarry C.M."/>
            <person name="Lippert R."/>
            <person name="Walenz B."/>
            <person name="Shatkay H."/>
            <person name="Dew I."/>
            <person name="Miller J.R."/>
            <person name="Flanigan M.J."/>
            <person name="Edwards N.J."/>
            <person name="Bolanos R."/>
            <person name="Fasulo D."/>
            <person name="Halldorsson B.V."/>
            <person name="Hannenhalli S."/>
            <person name="Turner R."/>
            <person name="Yooseph S."/>
            <person name="Lu F."/>
            <person name="Nusskern D.R."/>
            <person name="Shue B.C."/>
            <person name="Zheng X.H."/>
            <person name="Zhong F."/>
            <person name="Delcher A.L."/>
            <person name="Huson D.H."/>
            <person name="Kravitz S.A."/>
            <person name="Mouchard L."/>
            <person name="Reinert K."/>
            <person name="Remington K.A."/>
            <person name="Clark A.G."/>
            <person name="Waterman M.S."/>
            <person name="Eichler E.E."/>
            <person name="Adams M.D."/>
            <person name="Hunkapiller M.W."/>
            <person name="Myers E.W."/>
            <person name="Venter J.C."/>
        </authorList>
    </citation>
    <scope>NUCLEOTIDE SEQUENCE [LARGE SCALE GENOMIC DNA]</scope>
</reference>
<reference key="8">
    <citation type="journal article" date="2004" name="Genome Res.">
        <title>The status, quality, and expansion of the NIH full-length cDNA project: the Mammalian Gene Collection (MGC).</title>
        <authorList>
            <consortium name="The MGC Project Team"/>
        </authorList>
    </citation>
    <scope>NUCLEOTIDE SEQUENCE [LARGE SCALE MRNA] (ISOFORM 1)</scope>
    <source>
        <tissue>Adrenal cortex</tissue>
        <tissue>Liver</tissue>
        <tissue>Lymph</tissue>
        <tissue>Skin</tissue>
        <tissue>Testis</tissue>
    </source>
</reference>
<reference key="9">
    <citation type="journal article" date="1993" name="Genes Dev.">
        <title>A small nucleolar RNA is processed from an intron of the human gene encoding ribosomal protein S3.</title>
        <authorList>
            <person name="Tycowski K.T."/>
            <person name="Shu M.D."/>
            <person name="Steitz J.A."/>
        </authorList>
    </citation>
    <scope>NUCLEOTIDE SEQUENCE OF 1-94 (ISOFORM 1)</scope>
</reference>
<reference key="10">
    <citation type="submission" date="2008-02" db="UniProtKB">
        <authorList>
            <person name="Bienvenut W.V."/>
            <person name="Murray L."/>
            <person name="Brunton V.G."/>
            <person name="Frame M.C."/>
            <person name="Calvo F."/>
            <person name="Kolch W."/>
        </authorList>
    </citation>
    <scope>PROTEIN SEQUENCE OF 2-8; 10-64; 68-116; 118-141; 152-173; 186-197 AND 202-243</scope>
    <scope>CLEAVAGE OF INITIATOR METHIONINE</scope>
    <scope>ACETYLATION AT ALA-2</scope>
    <scope>IDENTIFICATION BY MASS SPECTROMETRY</scope>
    <source>
        <tissue>Cervix carcinoma</tissue>
        <tissue>Colon adenocarcinoma</tissue>
    </source>
</reference>
<reference key="11">
    <citation type="submission" date="2001-07" db="EMBL/GenBank/DDBJ databases">
        <title>Identification of immuno-peptidmics that are recognized by tumor-reactive CTL generated from TIL of colon cancer patients.</title>
        <authorList>
            <person name="Shichijo S."/>
            <person name="Itoh K."/>
        </authorList>
    </citation>
    <scope>NUCLEOTIDE SEQUENCE [LARGE SCALE MRNA] OF 4-243 (ISOFORM 1)</scope>
    <source>
        <tissue>Colon adenocarcinoma</tissue>
    </source>
</reference>
<reference key="12">
    <citation type="submission" date="2009-03" db="UniProtKB">
        <authorList>
            <person name="Bienvenut W.V."/>
            <person name="Waridel P."/>
            <person name="Quadroni M."/>
        </authorList>
    </citation>
    <scope>PROTEIN SEQUENCE OF 10-40; 46-54; 76-90; 95-106; 109-116; 118-132; 152-173; 179-185; 188-197 AND 202-243</scope>
    <scope>PHOSPHORYLATION AT THR-221</scope>
    <scope>IDENTIFICATION BY MASS SPECTROMETRY</scope>
    <source>
        <tissue>Cervix carcinoma</tissue>
    </source>
</reference>
<reference key="13">
    <citation type="journal article" date="1996" name="Eur. J. Biochem.">
        <title>Characterization of the human small-ribosomal-subunit proteins by N-terminal and internal sequencing, and mass spectrometry.</title>
        <authorList>
            <person name="Vladimirov S.N."/>
            <person name="Ivanov A.V."/>
            <person name="Karpova G.G."/>
            <person name="Musolyamov A.K."/>
            <person name="Egorov T.A."/>
            <person name="Thiede B."/>
            <person name="Wittmann-Liebold B."/>
            <person name="Otto A."/>
        </authorList>
    </citation>
    <scope>PROTEIN SEQUENCE OF 188-197</scope>
    <source>
        <tissue>Placenta</tissue>
    </source>
</reference>
<reference key="14">
    <citation type="journal article" date="1995" name="J. Biol. Chem.">
        <title>Implication of mammalian ribosomal protein S3 in the processing of DNA damage.</title>
        <authorList>
            <person name="Kim J."/>
            <person name="Chubatsu L.S."/>
            <person name="Admon A."/>
            <person name="Stahl J."/>
            <person name="Fellous R."/>
            <person name="Linn S."/>
        </authorList>
    </citation>
    <scope>FUNCTION</scope>
    <scope>CATALYTIC ACTIVITY</scope>
</reference>
<reference key="15">
    <citation type="journal article" date="2003" name="Nature">
        <title>Proteomic characterization of the human centrosome by protein correlation profiling.</title>
        <authorList>
            <person name="Andersen J.S."/>
            <person name="Wilkinson C.J."/>
            <person name="Mayor T."/>
            <person name="Mortensen P."/>
            <person name="Nigg E.A."/>
            <person name="Mann M."/>
        </authorList>
    </citation>
    <scope>IDENTIFICATION BY MASS SPECTROMETRY</scope>
    <source>
        <tissue>Lymphoblast</tissue>
    </source>
</reference>
<reference key="16">
    <citation type="journal article" date="2004" name="Biochemistry">
        <title>Human ribosomal protein S3 interacts with DNA base excision repair proteins hAPE/Ref-1 and hOGG1.</title>
        <authorList>
            <person name="Hegde V."/>
            <person name="Wang M."/>
            <person name="Deutsch W.A."/>
        </authorList>
    </citation>
    <scope>FUNCTION</scope>
    <scope>INTERACTION WITH APEX1 AND OGG1</scope>
</reference>
<reference key="17">
    <citation type="journal article" date="2004" name="DNA Repair">
        <title>Characterization of human ribosomal protein S3 binding to 7,8-dihydro-8-oxoguanine and abasic sites by surface plasmon resonance.</title>
        <authorList>
            <person name="Hegde V."/>
            <person name="Wang M."/>
            <person name="Deutsch W.A."/>
        </authorList>
    </citation>
    <scope>FUNCTION</scope>
</reference>
<reference key="18">
    <citation type="journal article" date="2004" name="FEBS Lett.">
        <title>RpS3, a DNA repair endonuclease and ribosomal protein, is involved in apoptosis.</title>
        <authorList>
            <person name="Jang C.Y."/>
            <person name="Lee J.Y."/>
            <person name="Kim J."/>
        </authorList>
    </citation>
    <scope>FUNCTION</scope>
</reference>
<reference key="19">
    <citation type="journal article" date="2005" name="Biochem. Biophys. Res. Commun.">
        <title>Characterization of a wide range base-damage-endonuclease activity of mammalian rpS3.</title>
        <authorList>
            <person name="Kim S.H."/>
            <person name="Lee J.Y."/>
            <person name="Kim J."/>
        </authorList>
    </citation>
    <scope>FUNCTION</scope>
    <scope>ACTIVITY REGULATION</scope>
    <scope>BIOPHYSICOCHEMICAL PROPERTIES</scope>
</reference>
<reference key="20">
    <citation type="journal article" date="2005" name="Biochem. Biophys. Res. Commun.">
        <title>Erk phosphorylates threonine 42 residue of ribosomal protein S3.</title>
        <authorList>
            <person name="Kim H.D."/>
            <person name="Lee J.Y."/>
            <person name="Kim J."/>
        </authorList>
    </citation>
    <scope>PHOSPHORYLATION AT THR-42</scope>
    <scope>MUTAGENESIS OF THR-42 AND THR-221</scope>
</reference>
<reference key="21">
    <citation type="journal article" date="2006" name="Cell">
        <title>Global, in vivo, and site-specific phosphorylation dynamics in signaling networks.</title>
        <authorList>
            <person name="Olsen J.V."/>
            <person name="Blagoev B."/>
            <person name="Gnad F."/>
            <person name="Macek B."/>
            <person name="Kumar C."/>
            <person name="Mortensen P."/>
            <person name="Mann M."/>
        </authorList>
    </citation>
    <scope>IDENTIFICATION BY MASS SPECTROMETRY [LARGE SCALE ANALYSIS]</scope>
    <source>
        <tissue>Cervix carcinoma</tissue>
    </source>
</reference>
<reference key="22">
    <citation type="journal article" date="2006" name="DNA Repair">
        <title>The high binding affinity of human ribosomal protein S3 to 7,8-dihydro-8-oxoguanine is abrogated by a single amino acid change.</title>
        <authorList>
            <person name="Hegde V."/>
            <person name="Wang M."/>
            <person name="Mian I.S."/>
            <person name="Spyres L."/>
            <person name="Deutsch W.A."/>
        </authorList>
    </citation>
    <scope>MUTAGENESIS OF LYS-132</scope>
</reference>
<reference key="23">
    <citation type="journal article" date="2006" name="Mol. Biol. Cell">
        <title>Interaction of Hsp90 with ribosomal proteins protects from ubiquitination and proteasome-dependent degradation.</title>
        <authorList>
            <person name="Kim T.S."/>
            <person name="Jang C.Y."/>
            <person name="Kim H.D."/>
            <person name="Lee J.Y."/>
            <person name="Ahn B.Y."/>
            <person name="Kim J."/>
        </authorList>
    </citation>
    <scope>INTERACTION WITH HSP90</scope>
    <scope>SUBCELLULAR LOCATION</scope>
    <scope>UBIQUITINATION</scope>
</reference>
<reference key="24">
    <citation type="journal article" date="2006" name="Nat. Biotechnol.">
        <title>A probability-based approach for high-throughput protein phosphorylation analysis and site localization.</title>
        <authorList>
            <person name="Beausoleil S.A."/>
            <person name="Villen J."/>
            <person name="Gerber S.A."/>
            <person name="Rush J."/>
            <person name="Gygi S.P."/>
        </authorList>
    </citation>
    <scope>PHOSPHORYLATION [LARGE SCALE ANALYSIS] AT THR-221</scope>
    <scope>IDENTIFICATION BY MASS SPECTROMETRY [LARGE SCALE ANALYSIS]</scope>
    <source>
        <tissue>Cervix carcinoma</tissue>
    </source>
</reference>
<reference key="25">
    <citation type="journal article" date="2006" name="Pituitary">
        <title>Phosphoproteomic analysis of the human pituitary.</title>
        <authorList>
            <person name="Beranova-Giorgianni S."/>
            <person name="Zhao Y."/>
            <person name="Desiderio D.M."/>
            <person name="Giorgianni F."/>
        </authorList>
    </citation>
    <scope>PHOSPHORYLATION [LARGE SCALE ANALYSIS] AT SER-224</scope>
    <scope>IDENTIFICATION BY MASS SPECTROMETRY [LARGE SCALE ANALYSIS]</scope>
    <source>
        <tissue>Pituitary</tissue>
    </source>
</reference>
<reference key="26">
    <citation type="journal article" date="2007" name="Cell">
        <title>Ribosomal protein S3: a KH domain subunit in NF-kappaB complexes that mediates selective gene regulation.</title>
        <authorList>
            <person name="Wan F."/>
            <person name="Anderson D.E."/>
            <person name="Barnitz R.A."/>
            <person name="Snow A."/>
            <person name="Bidere N."/>
            <person name="Zheng L."/>
            <person name="Hegde V."/>
            <person name="Lam L.T."/>
            <person name="Staudt L.M."/>
            <person name="Levens D."/>
            <person name="Deutsch W.A."/>
            <person name="Lenardo M.J."/>
        </authorList>
    </citation>
    <scope>FUNCTION</scope>
    <scope>INTERACTION WITH RELA</scope>
    <scope>IDENTIFICATION IN THE NF-KAPPA-B P65-P50 COMPLEX</scope>
    <scope>SUBCELLULAR LOCATION</scope>
    <scope>IDENTIFICATION BY MASS SPECTROMETRY</scope>
</reference>
<reference key="27">
    <citation type="journal article" date="2007" name="DNA Repair">
        <title>Knockdown of ribosomal protein S3 protects human cells from genotoxic stress.</title>
        <authorList>
            <person name="Hegde V."/>
            <person name="Yadavilli S."/>
            <person name="Deutsch W.A."/>
        </authorList>
    </citation>
    <scope>FUNCTION</scope>
</reference>
<reference key="28">
    <citation type="journal article" date="2007" name="DNA Repair">
        <title>Translocation of human ribosomal protein S3 to sites of DNA damage is dependant on ERK-mediated phosphorylation following genotoxic stress.</title>
        <authorList>
            <person name="Yadavilli S."/>
            <person name="Hegde V."/>
            <person name="Deutsch W.A."/>
        </authorList>
    </citation>
    <scope>SUBCELLULAR LOCATION</scope>
    <scope>PHOSPHORYLATION</scope>
    <scope>MUTAGENESIS OF THR-42</scope>
</reference>
<reference key="29">
    <citation type="journal article" date="2007" name="Mol. Cell. Proteomics">
        <title>Molecular composition of IMP1 ribonucleoprotein granules.</title>
        <authorList>
            <person name="Joeson L."/>
            <person name="Vikesaa J."/>
            <person name="Krogh A."/>
            <person name="Nielsen L.K."/>
            <person name="Hansen T."/>
            <person name="Borup R."/>
            <person name="Johnsen A.H."/>
            <person name="Christiansen J."/>
            <person name="Nielsen F.C."/>
        </authorList>
    </citation>
    <scope>IDENTIFICATION IN A MRNP GRANULE COMPLEX</scope>
    <scope>IDENTIFICATION BY MASS SPECTROMETRY</scope>
    <scope>SUBCELLULAR LOCATION</scope>
</reference>
<reference key="30">
    <citation type="journal article" date="2008" name="Mol. Biol. (Mosk.)">
        <title>Interactions of human ribosomal protein S3 with undamaged and damaged DNA.</title>
        <authorList>
            <person name="Balyeva K.E."/>
            <person name="Malygin A.A."/>
            <person name="Karpova G.G."/>
            <person name="Nevinskii G.A."/>
            <person name="Zharkov D.O."/>
        </authorList>
    </citation>
    <scope>FUNCTION</scope>
</reference>
<reference key="31">
    <citation type="journal article" date="2008" name="Mol. Cell">
        <title>Kinase-selective enrichment enables quantitative phosphoproteomics of the kinome across the cell cycle.</title>
        <authorList>
            <person name="Daub H."/>
            <person name="Olsen J.V."/>
            <person name="Bairlein M."/>
            <person name="Gnad F."/>
            <person name="Oppermann F.S."/>
            <person name="Korner R."/>
            <person name="Greff Z."/>
            <person name="Keri G."/>
            <person name="Stemmann O."/>
            <person name="Mann M."/>
        </authorList>
    </citation>
    <scope>PHOSPHORYLATION [LARGE SCALE ANALYSIS] AT THR-242</scope>
    <scope>IDENTIFICATION BY MASS SPECTROMETRY [LARGE SCALE ANALYSIS]</scope>
    <source>
        <tissue>Cervix carcinoma</tissue>
    </source>
</reference>
<reference key="32">
    <citation type="journal article" date="2008" name="Mutat. Res.">
        <title>Human ribosomal protein S3 (hRpS3) interacts with uracil-DNA glycosylase (hUNG) and stimulates its glycosylase activity.</title>
        <authorList>
            <person name="Ko S.I."/>
            <person name="Park J.H."/>
            <person name="Park M.J."/>
            <person name="Kim J."/>
            <person name="Kang L.W."/>
            <person name="Han Y.S."/>
        </authorList>
    </citation>
    <scope>FUNCTION</scope>
    <scope>INTERACTION WITH UNG</scope>
</reference>
<reference key="33">
    <citation type="journal article" date="2008" name="Proc. Natl. Acad. Sci. U.S.A.">
        <title>A quantitative atlas of mitotic phosphorylation.</title>
        <authorList>
            <person name="Dephoure N."/>
            <person name="Zhou C."/>
            <person name="Villen J."/>
            <person name="Beausoleil S.A."/>
            <person name="Bakalarski C.E."/>
            <person name="Elledge S.J."/>
            <person name="Gygi S.P."/>
        </authorList>
    </citation>
    <scope>PHOSPHORYLATION [LARGE SCALE ANALYSIS] AT THR-221</scope>
    <scope>IDENTIFICATION BY MASS SPECTROMETRY [LARGE SCALE ANALYSIS]</scope>
    <source>
        <tissue>Cervix carcinoma</tissue>
    </source>
</reference>
<reference key="34">
    <citation type="journal article" date="2009" name="Anal. Chem.">
        <title>Lys-N and trypsin cover complementary parts of the phosphoproteome in a refined SCX-based approach.</title>
        <authorList>
            <person name="Gauci S."/>
            <person name="Helbig A.O."/>
            <person name="Slijper M."/>
            <person name="Krijgsveld J."/>
            <person name="Heck A.J."/>
            <person name="Mohammed S."/>
        </authorList>
    </citation>
    <scope>ACETYLATION [LARGE SCALE ANALYSIS] AT ALA-2</scope>
    <scope>CLEAVAGE OF INITIATOR METHIONINE [LARGE SCALE ANALYSIS]</scope>
    <scope>IDENTIFICATION BY MASS SPECTROMETRY [LARGE SCALE ANALYSIS]</scope>
</reference>
<reference key="35">
    <citation type="journal article" date="2009" name="Biochem. Biophys. Res. Commun.">
        <title>Arginine methylation of ribosomal protein S3 affects ribosome assembly.</title>
        <authorList>
            <person name="Shin H.S."/>
            <person name="Jang C.Y."/>
            <person name="Kim H.D."/>
            <person name="Kim T.S."/>
            <person name="Kim S."/>
            <person name="Kim J."/>
        </authorList>
    </citation>
    <scope>INTERACTION WITH PRMT1</scope>
    <scope>SUBCELLULAR LOCATION</scope>
    <scope>METHYLATION AT ARG-64; ARG-65 AND ARG-67</scope>
</reference>
<reference key="36">
    <citation type="journal article" date="2009" name="Biochim. Biophys. Acta">
        <title>PKCdelta-dependent functional switch of rpS3 between translation and DNA repair.</title>
        <authorList>
            <person name="Kim T.S."/>
            <person name="Kim H.D."/>
            <person name="Kim J."/>
        </authorList>
    </citation>
    <scope>INTERACTION WITH PRKCD</scope>
    <scope>PHOSPHORYLATION AT SER-6 AND THR-221</scope>
    <scope>MUTAGENESIS OF SER-6; SER-35; THR-42; THR-70; SER-139; SER-149; THR-195 AND THR-221</scope>
</reference>
<reference key="37">
    <citation type="journal article" date="2009" name="DNA Repair">
        <title>Ribosomal protein S3: A multi-functional protein that interacts with both p53 and MDM2 through its KH domain.</title>
        <authorList>
            <person name="Yadavilli S."/>
            <person name="Mayo L.D."/>
            <person name="Higgins M."/>
            <person name="Lain S."/>
            <person name="Hegde V."/>
            <person name="Deutsch W.A."/>
        </authorList>
    </citation>
    <scope>FUNCTION</scope>
    <scope>INTERACTION WITH MDM2 AND TP53</scope>
    <scope>IDENTIFICATION BY MASS SPECTROMETRY</scope>
</reference>
<reference key="38">
    <citation type="journal article" date="2009" name="Mol. Cell. Proteomics">
        <title>Large-scale proteomics analysis of the human kinome.</title>
        <authorList>
            <person name="Oppermann F.S."/>
            <person name="Gnad F."/>
            <person name="Olsen J.V."/>
            <person name="Hornberger R."/>
            <person name="Greff Z."/>
            <person name="Keri G."/>
            <person name="Mann M."/>
            <person name="Daub H."/>
        </authorList>
    </citation>
    <scope>IDENTIFICATION BY MASS SPECTROMETRY [LARGE SCALE ANALYSIS]</scope>
</reference>
<reference key="39">
    <citation type="journal article" date="2009" name="PLoS Pathog.">
        <title>Bacterial effector binding to ribosomal protein s3 subverts NF-kappaB function.</title>
        <authorList>
            <person name="Gao X."/>
            <person name="Wan F."/>
            <person name="Mateo K."/>
            <person name="Callegari E."/>
            <person name="Wang D."/>
            <person name="Deng W."/>
            <person name="Puente J."/>
            <person name="Li F."/>
            <person name="Chaussee M.S."/>
            <person name="Finlay B.B."/>
            <person name="Lenardo M.J."/>
            <person name="Hardwidge P.R."/>
        </authorList>
    </citation>
    <scope>INTERACTION WITH E.COLI NLEH1 AND NLEH2</scope>
    <scope>IDENTIFICATION BY MASS SPECTROMETRY</scope>
</reference>
<reference key="40">
    <citation type="journal article" date="2009" name="RNA">
        <title>IGF2BP1 enhances HCV IRES-mediated translation initiation via the 3'UTR.</title>
        <authorList>
            <person name="Weinlich S."/>
            <person name="Huettelmaier S."/>
            <person name="Schierhorn A."/>
            <person name="Behrens S.-E."/>
            <person name="Ostareck-Lederer A."/>
            <person name="Ostareck D.H."/>
        </authorList>
    </citation>
    <scope>IDENTIFICATION IN A HCV IRES-MEDIATED TRANSLATION COMPLEX</scope>
</reference>
<reference key="41">
    <citation type="journal article" date="2009" name="Sci. Signal.">
        <title>Quantitative phosphoproteomic analysis of T cell receptor signaling reveals system-wide modulation of protein-protein interactions.</title>
        <authorList>
            <person name="Mayya V."/>
            <person name="Lundgren D.H."/>
            <person name="Hwang S.-I."/>
            <person name="Rezaul K."/>
            <person name="Wu L."/>
            <person name="Eng J.K."/>
            <person name="Rodionov V."/>
            <person name="Han D.K."/>
        </authorList>
    </citation>
    <scope>PHOSPHORYLATION [LARGE SCALE ANALYSIS] AT THR-221</scope>
    <scope>IDENTIFICATION BY MASS SPECTROMETRY [LARGE SCALE ANALYSIS]</scope>
    <source>
        <tissue>Leukemic T-cell</tissue>
    </source>
</reference>
<reference key="42">
    <citation type="journal article" date="2009" name="Science">
        <title>Lysine acetylation targets protein complexes and co-regulates major cellular functions.</title>
        <authorList>
            <person name="Choudhary C."/>
            <person name="Kumar C."/>
            <person name="Gnad F."/>
            <person name="Nielsen M.L."/>
            <person name="Rehman M."/>
            <person name="Walther T.C."/>
            <person name="Olsen J.V."/>
            <person name="Mann M."/>
        </authorList>
    </citation>
    <scope>ACETYLATION [LARGE SCALE ANALYSIS] AT LYS-62</scope>
    <scope>IDENTIFICATION BY MASS SPECTROMETRY [LARGE SCALE ANALYSIS]</scope>
</reference>
<reference key="43">
    <citation type="journal article" date="2010" name="J. Biol. Chem.">
        <title>Ribosomal protein S3, a new substrate of Akt, serves as a signal mediator between neuronal apoptosis and DNA repair.</title>
        <authorList>
            <person name="Lee S.B."/>
            <person name="Kwon I.S."/>
            <person name="Park J."/>
            <person name="Lee K.H."/>
            <person name="Ahn Y."/>
            <person name="Lee C."/>
            <person name="Kim J."/>
            <person name="Choi S.Y."/>
            <person name="Cho S.W."/>
            <person name="Ahn J.Y."/>
        </authorList>
    </citation>
    <scope>INTERACTION WITH E2F1 AND PKB</scope>
    <scope>PHOSPHORYLATION AT THR-70</scope>
    <scope>MUTAGENESIS OF THR-70</scope>
</reference>
<reference key="44">
    <citation type="journal article" date="2010" name="J. Cell. Biochem.">
        <title>RpS3 translation is repressed by interaction with its own mRNA.</title>
        <authorList>
            <person name="Kim H.D."/>
            <person name="Kim T.S."/>
            <person name="Joo Y.J."/>
            <person name="Shin H.S."/>
            <person name="Kim S.H."/>
            <person name="Jang C.Y."/>
            <person name="Lee C.E."/>
            <person name="Kim J."/>
        </authorList>
    </citation>
    <scope>FUNCTION</scope>
    <scope>SUBCELLULAR LOCATION</scope>
</reference>
<reference key="45">
    <citation type="journal article" date="2010" name="Sci. Signal.">
        <title>Quantitative phosphoproteomics reveals widespread full phosphorylation site occupancy during mitosis.</title>
        <authorList>
            <person name="Olsen J.V."/>
            <person name="Vermeulen M."/>
            <person name="Santamaria A."/>
            <person name="Kumar C."/>
            <person name="Miller M.L."/>
            <person name="Jensen L.J."/>
            <person name="Gnad F."/>
            <person name="Cox J."/>
            <person name="Jensen T.S."/>
            <person name="Nigg E.A."/>
            <person name="Brunak S."/>
            <person name="Mann M."/>
        </authorList>
    </citation>
    <scope>PHOSPHORYLATION [LARGE SCALE ANALYSIS] AT THR-221</scope>
    <scope>IDENTIFICATION BY MASS SPECTROMETRY [LARGE SCALE ANALYSIS]</scope>
    <source>
        <tissue>Cervix carcinoma</tissue>
    </source>
</reference>
<reference key="46">
    <citation type="journal article" date="2011" name="BMC Syst. Biol.">
        <title>Initial characterization of the human central proteome.</title>
        <authorList>
            <person name="Burkard T.R."/>
            <person name="Planyavsky M."/>
            <person name="Kaupe I."/>
            <person name="Breitwieser F.P."/>
            <person name="Buerckstuemmer T."/>
            <person name="Bennett K.L."/>
            <person name="Superti-Furga G."/>
            <person name="Colinge J."/>
        </authorList>
    </citation>
    <scope>IDENTIFICATION BY MASS SPECTROMETRY [LARGE SCALE ANALYSIS]</scope>
</reference>
<reference key="47">
    <citation type="journal article" date="2011" name="Biochem. Biophys. Res. Commun.">
        <title>Ribosomal protein S3 is stabilized by sumoylation.</title>
        <authorList>
            <person name="Jang C.Y."/>
            <person name="Shin H.S."/>
            <person name="Kim H.D."/>
            <person name="Kim J.W."/>
            <person name="Choi S.Y."/>
            <person name="Kim J."/>
        </authorList>
    </citation>
    <scope>INTERACTION WITH SUMO1 AND UBC9</scope>
    <scope>SUMOYLATION AT LYS-18; LYS-214 AND LYS-230</scope>
    <scope>MUTAGENESIS OF LYS-18; LYS-214 AND LYS-230</scope>
</reference>
<reference key="48">
    <citation type="journal article" date="2011" name="BMB Rep.">
        <title>Ribosomal protein S3 is phosphorylated by Cdk1/cdc2 during G2/M phase.</title>
        <authorList>
            <person name="Yoon I.S."/>
            <person name="Chung J.H."/>
            <person name="Hahm S.H."/>
            <person name="Park M.J."/>
            <person name="Lee Y.R."/>
            <person name="Ko S.I."/>
            <person name="Kang L.W."/>
            <person name="Kim T.S."/>
            <person name="Kim J."/>
            <person name="Han Y.S."/>
        </authorList>
    </citation>
    <scope>INTERACTION WITH CDK1</scope>
    <scope>SUBCELLULAR LOCATION</scope>
    <scope>PHOSPHORYLATION AT THR-221</scope>
    <scope>MUTAGENESIS OF SER-6; THR-42 AND THR-221</scope>
</reference>
<reference key="49">
    <citation type="journal article" date="2011" name="Nat. Immunol.">
        <title>IKKbeta phosphorylation regulates RPS3 nuclear translocation and NF-kappaB function during infection with Escherichia coli strain O157:H7.</title>
        <authorList>
            <person name="Wan F."/>
            <person name="Weaver A."/>
            <person name="Gao X."/>
            <person name="Bern M."/>
            <person name="Hardwidge P.R."/>
            <person name="Lenardo M.J."/>
        </authorList>
    </citation>
    <scope>INTERACTION WITH IKKB AND E.COLI NLEH1</scope>
    <scope>PHOSPHORYLATION AT SER-209</scope>
    <scope>MUTAGENESIS OF SER-209</scope>
</reference>
<reference key="50">
    <citation type="journal article" date="2011" name="Sci. Signal.">
        <title>System-wide temporal characterization of the proteome and phosphoproteome of human embryonic stem cell differentiation.</title>
        <authorList>
            <person name="Rigbolt K.T."/>
            <person name="Prokhorova T.A."/>
            <person name="Akimov V."/>
            <person name="Henningsen J."/>
            <person name="Johansen P.T."/>
            <person name="Kratchmarova I."/>
            <person name="Kassem M."/>
            <person name="Mann M."/>
            <person name="Olsen J.V."/>
            <person name="Blagoev B."/>
        </authorList>
    </citation>
    <scope>PHOSPHORYLATION [LARGE SCALE ANALYSIS] AT THR-221</scope>
    <scope>IDENTIFICATION BY MASS SPECTROMETRY [LARGE SCALE ANALYSIS]</scope>
</reference>
<reference key="51">
    <citation type="journal article" date="2012" name="Biochem. Biophys. Res. Commun.">
        <title>Ribosomal protein S3 interacts with TRADD to induce apoptosis through caspase dependent JNK activation.</title>
        <authorList>
            <person name="Jang C.Y."/>
            <person name="Kim H.D."/>
            <person name="Kim J."/>
        </authorList>
    </citation>
    <scope>FUNCTION</scope>
    <scope>INTERACTION WITH TRADD</scope>
</reference>
<reference key="52">
    <citation type="journal article" date="2012" name="Biochem. Biophys. Res. Commun.">
        <title>Ribosomal protein S3 localizes on the mitotic spindle and functions as a microtubule associated protein in mitosis.</title>
        <authorList>
            <person name="Jang C.Y."/>
            <person name="Kim H.D."/>
            <person name="Zhang X."/>
            <person name="Chang J.S."/>
            <person name="Kim J."/>
        </authorList>
    </citation>
    <scope>FUNCTION</scope>
    <scope>SUBCELLULAR LOCATION</scope>
</reference>
<reference key="53">
    <citation type="journal article" date="2012" name="Proc. Natl. Acad. Sci. U.S.A.">
        <title>N-terminal acetylome analyses and functional insights of the N-terminal acetyltransferase NatB.</title>
        <authorList>
            <person name="Van Damme P."/>
            <person name="Lasa M."/>
            <person name="Polevoda B."/>
            <person name="Gazquez C."/>
            <person name="Elosegui-Artola A."/>
            <person name="Kim D.S."/>
            <person name="De Juan-Pardo E."/>
            <person name="Demeyer K."/>
            <person name="Hole K."/>
            <person name="Larrea E."/>
            <person name="Timmerman E."/>
            <person name="Prieto J."/>
            <person name="Arnesen T."/>
            <person name="Sherman F."/>
            <person name="Gevaert K."/>
            <person name="Aldabe R."/>
        </authorList>
    </citation>
    <scope>ACETYLATION [LARGE SCALE ANALYSIS] AT ALA-2</scope>
    <scope>CLEAVAGE OF INITIATOR METHIONINE [LARGE SCALE ANALYSIS]</scope>
    <scope>IDENTIFICATION BY MASS SPECTROMETRY [LARGE SCALE ANALYSIS]</scope>
</reference>
<reference key="54">
    <citation type="journal article" date="2013" name="Biochim. Biophys. Acta">
        <title>Cytoplasmic ribosomal protein S3 (rpS3) plays a pivotal role in mitochondrial DNA damage surveillance.</title>
        <authorList>
            <person name="Kim Y."/>
            <person name="Kim H.D."/>
            <person name="Kim J."/>
        </authorList>
    </citation>
    <scope>FUNCTION</scope>
    <scope>INTERACTION WITH TOM70</scope>
    <scope>SUBCELLULAR LOCATION</scope>
</reference>
<reference key="55">
    <citation type="journal article" date="2013" name="J. Proteome Res.">
        <title>Toward a comprehensive characterization of a human cancer cell phosphoproteome.</title>
        <authorList>
            <person name="Zhou H."/>
            <person name="Di Palma S."/>
            <person name="Preisinger C."/>
            <person name="Peng M."/>
            <person name="Polat A.N."/>
            <person name="Heck A.J."/>
            <person name="Mohammed S."/>
        </authorList>
    </citation>
    <scope>PHOSPHORYLATION [LARGE SCALE ANALYSIS] AT SER-35; SER-104; THR-220 AND THR-221</scope>
    <scope>IDENTIFICATION BY MASS SPECTROMETRY [LARGE SCALE ANALYSIS]</scope>
    <source>
        <tissue>Cervix carcinoma</tissue>
        <tissue>Erythroleukemia</tissue>
    </source>
</reference>
<reference key="56">
    <citation type="journal article" date="2014" name="Curr. Opin. Struct. Biol.">
        <title>A new system for naming ribosomal proteins.</title>
        <authorList>
            <person name="Ban N."/>
            <person name="Beckmann R."/>
            <person name="Cate J.H.D."/>
            <person name="Dinman J.D."/>
            <person name="Dragon F."/>
            <person name="Ellis S.R."/>
            <person name="Lafontaine D.L.J."/>
            <person name="Lindahl L."/>
            <person name="Liljas A."/>
            <person name="Lipton J.M."/>
            <person name="McAlear M.A."/>
            <person name="Moore P.B."/>
            <person name="Noller H.F."/>
            <person name="Ortega J."/>
            <person name="Panse V.G."/>
            <person name="Ramakrishnan V."/>
            <person name="Spahn C.M.T."/>
            <person name="Steitz T.A."/>
            <person name="Tchorzewski M."/>
            <person name="Tollervey D."/>
            <person name="Warren A.J."/>
            <person name="Williamson J.R."/>
            <person name="Wilson D."/>
            <person name="Yonath A."/>
            <person name="Yusupov M."/>
        </authorList>
    </citation>
    <scope>NOMENCLATURE</scope>
</reference>
<reference key="57">
    <citation type="journal article" date="2014" name="FEBS Lett.">
        <title>Ribosomal protein S3 interacts with the NF-kappaB inhibitor IkappaBalpha.</title>
        <authorList>
            <person name="Stanborough T."/>
            <person name="Niederhauser J."/>
            <person name="Koch B."/>
            <person name="Bergler H."/>
            <person name="Pertschy B."/>
        </authorList>
    </citation>
    <scope>INTERACTION WITH NFKBIA</scope>
</reference>
<reference key="58">
    <citation type="journal article" date="2014" name="J. Proteomics">
        <title>An enzyme assisted RP-RPLC approach for in-depth analysis of human liver phosphoproteome.</title>
        <authorList>
            <person name="Bian Y."/>
            <person name="Song C."/>
            <person name="Cheng K."/>
            <person name="Dong M."/>
            <person name="Wang F."/>
            <person name="Huang J."/>
            <person name="Sun D."/>
            <person name="Wang L."/>
            <person name="Ye M."/>
            <person name="Zou H."/>
        </authorList>
    </citation>
    <scope>PHOSPHORYLATION [LARGE SCALE ANALYSIS] AT THR-221 AND THR-242</scope>
    <scope>IDENTIFICATION BY MASS SPECTROMETRY [LARGE SCALE ANALYSIS]</scope>
    <source>
        <tissue>Liver</tissue>
    </source>
</reference>
<reference key="59">
    <citation type="journal article" date="2014" name="Nucleic Acids Res.">
        <title>AUF1 contributes to Cryptochrome1 mRNA degradation and rhythmic translation.</title>
        <authorList>
            <person name="Lee K.H."/>
            <person name="Kim S.H."/>
            <person name="Kim H.J."/>
            <person name="Kim W."/>
            <person name="Lee H.R."/>
            <person name="Jung Y."/>
            <person name="Choi J.H."/>
            <person name="Hong K.Y."/>
            <person name="Jang S.K."/>
            <person name="Kim K.T."/>
        </authorList>
    </citation>
    <scope>INTERACTION WITH HNRPD</scope>
</reference>
<reference key="60">
    <citation type="journal article" date="2014" name="Proc. Natl. Acad. Sci. U.S.A.">
        <title>Mapping of SUMO sites and analysis of SUMOylation changes induced by external stimuli.</title>
        <authorList>
            <person name="Impens F."/>
            <person name="Radoshevich L."/>
            <person name="Cossart P."/>
            <person name="Ribet D."/>
        </authorList>
    </citation>
    <scope>SUMOYLATION [LARGE SCALE ANALYSIS] AT LYS-230</scope>
    <scope>IDENTIFICATION BY MASS SPECTROMETRY [LARGE SCALE ANALYSIS]</scope>
</reference>
<reference key="61">
    <citation type="journal article" date="2015" name="Proteomics">
        <title>N-terminome analysis of the human mitochondrial proteome.</title>
        <authorList>
            <person name="Vaca Jacome A.S."/>
            <person name="Rabilloud T."/>
            <person name="Schaeffer-Reiss C."/>
            <person name="Rompais M."/>
            <person name="Ayoub D."/>
            <person name="Lane L."/>
            <person name="Bairoch A."/>
            <person name="Van Dorsselaer A."/>
            <person name="Carapito C."/>
        </authorList>
    </citation>
    <scope>ACETYLATION [LARGE SCALE ANALYSIS] AT ALA-2</scope>
    <scope>CLEAVAGE OF INITIATOR METHIONINE [LARGE SCALE ANALYSIS]</scope>
    <scope>IDENTIFICATION BY MASS SPECTROMETRY [LARGE SCALE ANALYSIS]</scope>
</reference>
<reference key="62">
    <citation type="journal article" date="2016" name="Mol. Cell">
        <title>Initiation of quality control during poly(A) translation requires site-specific ribosome ubiquitination.</title>
        <authorList>
            <person name="Juszkiewicz S."/>
            <person name="Hegde R.S."/>
        </authorList>
    </citation>
    <scope>UBIQUITINATION AT LYS-214</scope>
</reference>
<reference key="63">
    <citation type="journal article" date="2017" name="Mol. Cell">
        <title>ZNF598 and RACK1 regulate mammalian ribosome-associated quality control function by mediating regulatory 40S ribosomal ubiquitylation.</title>
        <authorList>
            <person name="Sundaramoorthy E."/>
            <person name="Leonard M."/>
            <person name="Mak R."/>
            <person name="Liao J."/>
            <person name="Fulzele A."/>
            <person name="Bennett E.J."/>
        </authorList>
    </citation>
    <scope>UBIQUITINATION AT LYS-214</scope>
</reference>
<reference key="64">
    <citation type="journal article" date="2017" name="Nat. Commun.">
        <title>Ubiquitination of stalled ribosome triggers ribosome-associated quality control.</title>
        <authorList>
            <person name="Matsuo Y."/>
            <person name="Ikeuchi K."/>
            <person name="Saeki Y."/>
            <person name="Iwasaki S."/>
            <person name="Schmidt C."/>
            <person name="Udagawa T."/>
            <person name="Sato F."/>
            <person name="Tsuchiya H."/>
            <person name="Becker T."/>
            <person name="Tanaka K."/>
            <person name="Ingolia N.T."/>
            <person name="Beckmann R."/>
            <person name="Inada T."/>
        </authorList>
    </citation>
    <scope>INTERACTION WITH ASCC3</scope>
</reference>
<reference key="65">
    <citation type="journal article" date="2017" name="Nat. Struct. Mol. Biol.">
        <title>Site-specific mapping of the human SUMO proteome reveals co-modification with phosphorylation.</title>
        <authorList>
            <person name="Hendriks I.A."/>
            <person name="Lyon D."/>
            <person name="Young C."/>
            <person name="Jensen L.J."/>
            <person name="Vertegaal A.C."/>
            <person name="Nielsen M.L."/>
        </authorList>
    </citation>
    <scope>SUMOYLATION [LARGE SCALE ANALYSIS] AT LYS-214 AND LYS-230</scope>
    <scope>IDENTIFICATION BY MASS SPECTROMETRY [LARGE SCALE ANALYSIS]</scope>
</reference>
<reference key="66">
    <citation type="journal article" date="2020" name="Elife">
        <title>Distinct regulatory ribosomal ubiquitylation events are reversible and hierarchically organized.</title>
        <authorList>
            <person name="Garshott D.M."/>
            <person name="Sundaramoorthy E."/>
            <person name="Leonard M."/>
            <person name="Bennett E.J."/>
        </authorList>
    </citation>
    <scope>UBIQUITINATION AT LYS-214</scope>
</reference>
<reference key="67">
    <citation type="journal article" date="2020" name="Mol. Cell">
        <title>The G3BP1-family-USP10 deubiquitinase complex rescues ubiquitinated 40S subunits of ribosomes stalled in translation from lysosomal degradation.</title>
        <authorList>
            <person name="Meyer C."/>
            <person name="Garzia A."/>
            <person name="Morozov P."/>
            <person name="Molina H."/>
            <person name="Tuschl T."/>
        </authorList>
    </citation>
    <scope>UBIQUITINATION AT LYS-214</scope>
    <scope>MUTAGENESIS OF LYS-214; LYS-227 AND LYS-230</scope>
</reference>
<reference key="68">
    <citation type="journal article" date="2021" name="Cell Rep.">
        <title>The E3 ubiquitin ligase RNF10 modifies 40S ribosomal subunits of ribosomes compromised in translation.</title>
        <authorList>
            <person name="Garzia A."/>
            <person name="Meyer C."/>
            <person name="Tuschl T."/>
        </authorList>
    </citation>
    <scope>UBIQUITINATION AT LYS-214</scope>
    <scope>MUTAGENESIS OF LYS-214; LYS-227 AND LYS-230</scope>
</reference>
<reference key="69">
    <citation type="journal article" date="2021" name="Cell Rep.">
        <title>iRQC, a surveillance pathway for 40S ribosomal quality control during mRNA translation initiation.</title>
        <authorList>
            <person name="Garshott D.M."/>
            <person name="An H."/>
            <person name="Sundaramoorthy E."/>
            <person name="Leonard M."/>
            <person name="Vicary A."/>
            <person name="Harper J.W."/>
            <person name="Bennett E.J."/>
        </authorList>
    </citation>
    <scope>UBIQUITINATION AT LYS-214</scope>
</reference>
<reference key="70">
    <citation type="submission" date="2004-11" db="PDB data bank">
        <title>Solution structure of the KH domain of human ribosomal protein S3.</title>
        <authorList>
            <consortium name="RIKEN structural genomics initiative (RSGI)"/>
        </authorList>
    </citation>
    <scope>STRUCTURE BY NMR OF 17-95</scope>
</reference>
<reference key="71">
    <citation type="journal article" date="2013" name="Nature">
        <title>Structures of the human and Drosophila 80S ribosome.</title>
        <authorList>
            <person name="Anger A.M."/>
            <person name="Armache J.P."/>
            <person name="Berninghausen O."/>
            <person name="Habeck M."/>
            <person name="Subklewe M."/>
            <person name="Wilson D.N."/>
            <person name="Beckmann R."/>
        </authorList>
    </citation>
    <scope>STRUCTURE BY ELECTRON MICROSCOPY (5.0 ANGSTROMS) OF 80S RIBOSOME</scope>
    <scope>FUNCTION</scope>
    <scope>SUBUNIT</scope>
    <scope>SUBCELLULAR LOCATION</scope>
</reference>
<protein>
    <recommendedName>
        <fullName evidence="47">Small ribosomal subunit protein uS3</fullName>
    </recommendedName>
    <alternativeName>
        <fullName evidence="45">40S ribosomal protein S3</fullName>
        <ecNumber evidence="40">4.2.99.18</ecNumber>
    </alternativeName>
</protein>
<proteinExistence type="evidence at protein level"/>
<name>RS3_HUMAN</name>
<feature type="initiator methionine" description="Removed" evidence="42 53 58 62">
    <location>
        <position position="1"/>
    </location>
</feature>
<feature type="chain" id="PRO_0000130320" description="Small ribosomal subunit protein uS3">
    <location>
        <begin position="2"/>
        <end position="243"/>
    </location>
</feature>
<feature type="domain" description="KH type-2" evidence="2">
    <location>
        <begin position="21"/>
        <end position="92"/>
    </location>
</feature>
<feature type="region of interest" description="Disordered" evidence="3">
    <location>
        <begin position="214"/>
        <end position="243"/>
    </location>
</feature>
<feature type="compositionally biased region" description="Pro residues" evidence="3">
    <location>
        <begin position="231"/>
        <end position="243"/>
    </location>
</feature>
<feature type="modified residue" description="N-acetylalanine" evidence="42 53 58 62">
    <location>
        <position position="2"/>
    </location>
</feature>
<feature type="modified residue" description="Phosphoserine; by PKC/PRKCD" evidence="17">
    <location>
        <position position="6"/>
    </location>
</feature>
<feature type="modified residue" description="Phosphoserine" evidence="59">
    <location>
        <position position="35"/>
    </location>
</feature>
<feature type="modified residue" description="Phosphothreonine; by MAPK" evidence="8">
    <location>
        <position position="42"/>
    </location>
</feature>
<feature type="modified residue" description="N6-acetyllysine" evidence="54">
    <location>
        <position position="62"/>
    </location>
</feature>
<feature type="modified residue" description="Asymmetric dimethylarginine; by PRMT1" evidence="18">
    <location>
        <position position="64"/>
    </location>
</feature>
<feature type="modified residue" description="Asymmetric dimethylarginine; by PRMT1" evidence="18">
    <location>
        <position position="65"/>
    </location>
</feature>
<feature type="modified residue" description="Asymmetric dimethylarginine; by PRMT1" evidence="18">
    <location>
        <position position="67"/>
    </location>
</feature>
<feature type="modified residue" description="Phosphothreonine; by PKB" evidence="23">
    <location>
        <position position="70"/>
    </location>
</feature>
<feature type="modified residue" description="Phosphoserine" evidence="59">
    <location>
        <position position="104"/>
    </location>
</feature>
<feature type="modified residue" description="N6-succinyllysine" evidence="1">
    <location>
        <position position="132"/>
    </location>
</feature>
<feature type="modified residue" description="Phosphoserine; by IKKB" evidence="24">
    <location>
        <position position="209"/>
    </location>
</feature>
<feature type="modified residue" description="Phosphothreonine" evidence="59">
    <location>
        <position position="220"/>
    </location>
</feature>
<feature type="modified residue" description="Phosphothreonine; by CDK1 and PKC/PRKCD" evidence="17 25 43 50 51 55 56 57 59 60">
    <location>
        <position position="221"/>
    </location>
</feature>
<feature type="modified residue" description="Phosphoserine" evidence="49">
    <location>
        <position position="224"/>
    </location>
</feature>
<feature type="modified residue" description="Phosphothreonine" evidence="52 60">
    <location>
        <position position="242"/>
    </location>
</feature>
<feature type="cross-link" description="Glycyl lysine isopeptide (Lys-Gly) (interchain with G-Cter in ubiquitin)">
    <location>
        <position position="90"/>
    </location>
</feature>
<feature type="cross-link" description="Glycyl lysine isopeptide (Lys-Gly) (interchain with G-Cter in ubiquitin)">
    <location>
        <position position="202"/>
    </location>
</feature>
<feature type="cross-link" description="Glycyl lysine isopeptide (Lys-Gly) (interchain with G-Cter in SUMO2); alternate" evidence="63">
    <location>
        <position position="214"/>
    </location>
</feature>
<feature type="cross-link" description="Glycyl lysine isopeptide (Lys-Gly) (interchain with G-Cter in ubiquitin); alternate" evidence="33 34 36 37 38 39">
    <location>
        <position position="214"/>
    </location>
</feature>
<feature type="cross-link" description="Glycyl lysine isopeptide (Lys-Gly) (interchain with G-Cter in SUMO2)" evidence="61 63">
    <location>
        <position position="230"/>
    </location>
</feature>
<feature type="splice variant" id="VSP_046667" description="In isoform 2." evidence="48">
    <original>E</original>
    <variation>ELKIMVMVTGYPLLPLK</variation>
    <location>
        <position position="85"/>
    </location>
</feature>
<feature type="mutagenesis site" description="No effect on phosphorylation by CDK1. Greatly reduced phosphorylation by PRKCD. Abolishes phosphorylation by PRKCD; when associated with A-221." evidence="17 25">
    <original>S</original>
    <variation>A</variation>
    <location>
        <position position="6"/>
    </location>
</feature>
<feature type="mutagenesis site" description="No effect on sumoylation. Abolishes sumoylation; when associated with R-214 and R-230." evidence="26">
    <original>K</original>
    <variation>R</variation>
    <location>
        <position position="18"/>
    </location>
</feature>
<feature type="mutagenesis site" description="No effect on phosphorylation by PRKCD." evidence="17">
    <original>S</original>
    <variation>A</variation>
    <location>
        <position position="35"/>
    </location>
</feature>
<feature type="mutagenesis site" description="Abolishes phosphorylation by MAPK and translocation to the nucleus following exposure of cells to hydrogen peroxide. No effect on phosphorylation by CDK1 or PRKCD." evidence="8 13 17 25">
    <original>T</original>
    <variation>A</variation>
    <location>
        <position position="42"/>
    </location>
</feature>
<feature type="mutagenesis site" description="Phosphomimetic mutant which is detected exclusively in the nucleus." evidence="13">
    <original>T</original>
    <variation>D</variation>
    <location>
        <position position="42"/>
    </location>
</feature>
<feature type="mutagenesis site" description="No effect on phosphorylation by PRKCD. Abolishes phosphorylation by PKB." evidence="17 23">
    <original>T</original>
    <variation>A</variation>
    <location>
        <position position="70"/>
    </location>
</feature>
<feature type="mutagenesis site" description="Abolishes phosphorylation by PKB." evidence="23">
    <original>T</original>
    <variation>D</variation>
    <variation>E</variation>
    <variation>R</variation>
    <location>
        <position position="70"/>
    </location>
</feature>
<feature type="mutagenesis site" description="Does not affect ability to cleave DNA but abolishes binding to 8-oxoG." evidence="10">
    <original>K</original>
    <variation>A</variation>
    <location>
        <position position="132"/>
    </location>
</feature>
<feature type="mutagenesis site" description="No effect on phosphorylation by PRKCD." evidence="17">
    <original>S</original>
    <variation>A</variation>
    <location>
        <position position="139"/>
    </location>
</feature>
<feature type="mutagenesis site" description="No effect on phosphorylation by PRKCD." evidence="17">
    <original>S</original>
    <variation>A</variation>
    <location>
        <position position="149"/>
    </location>
</feature>
<feature type="mutagenesis site" description="No effect on phosphorylation by PRKCD." evidence="17">
    <original>T</original>
    <variation>A</variation>
    <location>
        <position position="195"/>
    </location>
</feature>
<feature type="mutagenesis site" description="Reduced phosphorylation by IKKB." evidence="24">
    <original>S</original>
    <variation>A</variation>
    <location>
        <position position="209"/>
    </location>
</feature>
<feature type="mutagenesis site" description="No effect on sumoylation. Abolishes sumoylation; when associated with R-18 and R-230. Abolished ubiquitination by RNF10 in response to ribosome stalling and deubiquitination by USP10." evidence="26 36 38">
    <original>K</original>
    <variation>R</variation>
    <location>
        <position position="214"/>
    </location>
</feature>
<feature type="mutagenesis site" description="No effect on phosphorylation by MAPK. Significantly reduces phosphorylation by CDK1 and nuclear accumulation. Greatly reduced phosphorylation by PRKCD. Abolishes phosphorylation by PRKCD; when associated with A-6." evidence="8 17 25">
    <original>T</original>
    <variation>A</variation>
    <location>
        <position position="221"/>
    </location>
</feature>
<feature type="mutagenesis site" description="Does not affect ubiquitination in response to ribosome stalling." evidence="36 38">
    <original>K</original>
    <variation>R</variation>
    <location>
        <position position="227"/>
    </location>
</feature>
<feature type="mutagenesis site" description="No effect on sumoylation. Abolishes sumoylation; when associated with R-18 and R-214. Does not affect ubiquitination in response to ribosome stalling." evidence="26 36 38">
    <original>K</original>
    <variation>R</variation>
    <location>
        <position position="230"/>
    </location>
</feature>
<feature type="sequence conflict" description="In Ref. 2; AAB19349." evidence="48" ref="2">
    <original>K</original>
    <variation>R</variation>
    <location>
        <position position="8"/>
    </location>
</feature>
<feature type="sequence conflict" description="In Ref. 1; CAA39248." evidence="48" ref="1">
    <original>S</original>
    <variation>C</variation>
    <location>
        <position position="104"/>
    </location>
</feature>
<feature type="sequence conflict" description="In Ref. 1; CAA39248." evidence="48" ref="1">
    <original>P</original>
    <variation>L</variation>
    <location>
        <position position="233"/>
    </location>
</feature>
<feature type="helix" evidence="66">
    <location>
        <begin position="7"/>
        <end position="29"/>
    </location>
</feature>
<feature type="helix" evidence="66">
    <location>
        <begin position="30"/>
        <end position="32"/>
    </location>
</feature>
<feature type="strand" evidence="66">
    <location>
        <begin position="34"/>
        <end position="41"/>
    </location>
</feature>
<feature type="strand" evidence="66">
    <location>
        <begin position="46"/>
        <end position="53"/>
    </location>
</feature>
<feature type="helix" evidence="66">
    <location>
        <begin position="55"/>
        <end position="59"/>
    </location>
</feature>
<feature type="helix" evidence="66">
    <location>
        <begin position="61"/>
        <end position="63"/>
    </location>
</feature>
<feature type="helix" evidence="66">
    <location>
        <begin position="64"/>
        <end position="77"/>
    </location>
</feature>
<feature type="strand" evidence="66">
    <location>
        <begin position="83"/>
        <end position="89"/>
    </location>
</feature>
<feature type="helix" evidence="66">
    <location>
        <begin position="94"/>
        <end position="96"/>
    </location>
</feature>
<feature type="helix" evidence="66">
    <location>
        <begin position="98"/>
        <end position="109"/>
    </location>
</feature>
<feature type="turn" evidence="66">
    <location>
        <begin position="110"/>
        <end position="112"/>
    </location>
</feature>
<feature type="helix" evidence="66">
    <location>
        <begin position="115"/>
        <end position="128"/>
    </location>
</feature>
<feature type="strand" evidence="66">
    <location>
        <begin position="132"/>
        <end position="140"/>
    </location>
</feature>
<feature type="strand" evidence="66">
    <location>
        <begin position="142"/>
        <end position="146"/>
    </location>
</feature>
<feature type="strand" evidence="66">
    <location>
        <begin position="148"/>
        <end position="155"/>
    </location>
</feature>
<feature type="strand" evidence="65">
    <location>
        <begin position="160"/>
        <end position="162"/>
    </location>
</feature>
<feature type="helix" evidence="66">
    <location>
        <begin position="163"/>
        <end position="167"/>
    </location>
</feature>
<feature type="strand" evidence="66">
    <location>
        <begin position="168"/>
        <end position="177"/>
    </location>
</feature>
<feature type="strand" evidence="66">
    <location>
        <begin position="180"/>
        <end position="189"/>
    </location>
</feature>
<feature type="strand" evidence="66">
    <location>
        <begin position="194"/>
        <end position="199"/>
    </location>
</feature>
<feature type="strand" evidence="64">
    <location>
        <begin position="223"/>
        <end position="226"/>
    </location>
</feature>
<accession>P23396</accession>
<accession>B2R7N5</accession>
<accession>J3KN86</accession>
<accession>Q498B5</accession>
<accession>Q8NI95</accession>
<organism>
    <name type="scientific">Homo sapiens</name>
    <name type="common">Human</name>
    <dbReference type="NCBI Taxonomy" id="9606"/>
    <lineage>
        <taxon>Eukaryota</taxon>
        <taxon>Metazoa</taxon>
        <taxon>Chordata</taxon>
        <taxon>Craniata</taxon>
        <taxon>Vertebrata</taxon>
        <taxon>Euteleostomi</taxon>
        <taxon>Mammalia</taxon>
        <taxon>Eutheria</taxon>
        <taxon>Euarchontoglires</taxon>
        <taxon>Primates</taxon>
        <taxon>Haplorrhini</taxon>
        <taxon>Catarrhini</taxon>
        <taxon>Hominidae</taxon>
        <taxon>Homo</taxon>
    </lineage>
</organism>